<gene>
    <name type="primary">KIFC3</name>
</gene>
<reference key="1">
    <citation type="journal article" date="2004" name="Nat. Genet.">
        <title>Complete sequencing and characterization of 21,243 full-length human cDNAs.</title>
        <authorList>
            <person name="Ota T."/>
            <person name="Suzuki Y."/>
            <person name="Nishikawa T."/>
            <person name="Otsuki T."/>
            <person name="Sugiyama T."/>
            <person name="Irie R."/>
            <person name="Wakamatsu A."/>
            <person name="Hayashi K."/>
            <person name="Sato H."/>
            <person name="Nagai K."/>
            <person name="Kimura K."/>
            <person name="Makita H."/>
            <person name="Sekine M."/>
            <person name="Obayashi M."/>
            <person name="Nishi T."/>
            <person name="Shibahara T."/>
            <person name="Tanaka T."/>
            <person name="Ishii S."/>
            <person name="Yamamoto J."/>
            <person name="Saito K."/>
            <person name="Kawai Y."/>
            <person name="Isono Y."/>
            <person name="Nakamura Y."/>
            <person name="Nagahari K."/>
            <person name="Murakami K."/>
            <person name="Yasuda T."/>
            <person name="Iwayanagi T."/>
            <person name="Wagatsuma M."/>
            <person name="Shiratori A."/>
            <person name="Sudo H."/>
            <person name="Hosoiri T."/>
            <person name="Kaku Y."/>
            <person name="Kodaira H."/>
            <person name="Kondo H."/>
            <person name="Sugawara M."/>
            <person name="Takahashi M."/>
            <person name="Kanda K."/>
            <person name="Yokoi T."/>
            <person name="Furuya T."/>
            <person name="Kikkawa E."/>
            <person name="Omura Y."/>
            <person name="Abe K."/>
            <person name="Kamihara K."/>
            <person name="Katsuta N."/>
            <person name="Sato K."/>
            <person name="Tanikawa M."/>
            <person name="Yamazaki M."/>
            <person name="Ninomiya K."/>
            <person name="Ishibashi T."/>
            <person name="Yamashita H."/>
            <person name="Murakawa K."/>
            <person name="Fujimori K."/>
            <person name="Tanai H."/>
            <person name="Kimata M."/>
            <person name="Watanabe M."/>
            <person name="Hiraoka S."/>
            <person name="Chiba Y."/>
            <person name="Ishida S."/>
            <person name="Ono Y."/>
            <person name="Takiguchi S."/>
            <person name="Watanabe S."/>
            <person name="Yosida M."/>
            <person name="Hotuta T."/>
            <person name="Kusano J."/>
            <person name="Kanehori K."/>
            <person name="Takahashi-Fujii A."/>
            <person name="Hara H."/>
            <person name="Tanase T.-O."/>
            <person name="Nomura Y."/>
            <person name="Togiya S."/>
            <person name="Komai F."/>
            <person name="Hara R."/>
            <person name="Takeuchi K."/>
            <person name="Arita M."/>
            <person name="Imose N."/>
            <person name="Musashino K."/>
            <person name="Yuuki H."/>
            <person name="Oshima A."/>
            <person name="Sasaki N."/>
            <person name="Aotsuka S."/>
            <person name="Yoshikawa Y."/>
            <person name="Matsunawa H."/>
            <person name="Ichihara T."/>
            <person name="Shiohata N."/>
            <person name="Sano S."/>
            <person name="Moriya S."/>
            <person name="Momiyama H."/>
            <person name="Satoh N."/>
            <person name="Takami S."/>
            <person name="Terashima Y."/>
            <person name="Suzuki O."/>
            <person name="Nakagawa S."/>
            <person name="Senoh A."/>
            <person name="Mizoguchi H."/>
            <person name="Goto Y."/>
            <person name="Shimizu F."/>
            <person name="Wakebe H."/>
            <person name="Hishigaki H."/>
            <person name="Watanabe T."/>
            <person name="Sugiyama A."/>
            <person name="Takemoto M."/>
            <person name="Kawakami B."/>
            <person name="Yamazaki M."/>
            <person name="Watanabe K."/>
            <person name="Kumagai A."/>
            <person name="Itakura S."/>
            <person name="Fukuzumi Y."/>
            <person name="Fujimori Y."/>
            <person name="Komiyama M."/>
            <person name="Tashiro H."/>
            <person name="Tanigami A."/>
            <person name="Fujiwara T."/>
            <person name="Ono T."/>
            <person name="Yamada K."/>
            <person name="Fujii Y."/>
            <person name="Ozaki K."/>
            <person name="Hirao M."/>
            <person name="Ohmori Y."/>
            <person name="Kawabata A."/>
            <person name="Hikiji T."/>
            <person name="Kobatake N."/>
            <person name="Inagaki H."/>
            <person name="Ikema Y."/>
            <person name="Okamoto S."/>
            <person name="Okitani R."/>
            <person name="Kawakami T."/>
            <person name="Noguchi S."/>
            <person name="Itoh T."/>
            <person name="Shigeta K."/>
            <person name="Senba T."/>
            <person name="Matsumura K."/>
            <person name="Nakajima Y."/>
            <person name="Mizuno T."/>
            <person name="Morinaga M."/>
            <person name="Sasaki M."/>
            <person name="Togashi T."/>
            <person name="Oyama M."/>
            <person name="Hata H."/>
            <person name="Watanabe M."/>
            <person name="Komatsu T."/>
            <person name="Mizushima-Sugano J."/>
            <person name="Satoh T."/>
            <person name="Shirai Y."/>
            <person name="Takahashi Y."/>
            <person name="Nakagawa K."/>
            <person name="Okumura K."/>
            <person name="Nagase T."/>
            <person name="Nomura N."/>
            <person name="Kikuchi H."/>
            <person name="Masuho Y."/>
            <person name="Yamashita R."/>
            <person name="Nakai K."/>
            <person name="Yada T."/>
            <person name="Nakamura Y."/>
            <person name="Ohara O."/>
            <person name="Isogai T."/>
            <person name="Sugano S."/>
        </authorList>
    </citation>
    <scope>NUCLEOTIDE SEQUENCE [LARGE SCALE MRNA] (ISOFORMS 4 AND 5)</scope>
    <source>
        <tissue>Placenta</tissue>
        <tissue>Tongue</tissue>
    </source>
</reference>
<reference key="2">
    <citation type="submission" date="2005-03" db="EMBL/GenBank/DDBJ databases">
        <authorList>
            <person name="Totoki Y."/>
            <person name="Toyoda A."/>
            <person name="Takeda T."/>
            <person name="Sakaki Y."/>
            <person name="Tanaka A."/>
            <person name="Yokoyama S."/>
            <person name="Ohara O."/>
            <person name="Nagase T."/>
            <person name="Kikuno R.F."/>
        </authorList>
    </citation>
    <scope>NUCLEOTIDE SEQUENCE [LARGE SCALE MRNA] (ISOFORM 2)</scope>
    <source>
        <tissue>Brain</tissue>
    </source>
</reference>
<reference key="3">
    <citation type="journal article" date="2004" name="Nature">
        <title>The sequence and analysis of duplication-rich human chromosome 16.</title>
        <authorList>
            <person name="Martin J."/>
            <person name="Han C."/>
            <person name="Gordon L.A."/>
            <person name="Terry A."/>
            <person name="Prabhakar S."/>
            <person name="She X."/>
            <person name="Xie G."/>
            <person name="Hellsten U."/>
            <person name="Chan Y.M."/>
            <person name="Altherr M."/>
            <person name="Couronne O."/>
            <person name="Aerts A."/>
            <person name="Bajorek E."/>
            <person name="Black S."/>
            <person name="Blumer H."/>
            <person name="Branscomb E."/>
            <person name="Brown N.C."/>
            <person name="Bruno W.J."/>
            <person name="Buckingham J.M."/>
            <person name="Callen D.F."/>
            <person name="Campbell C.S."/>
            <person name="Campbell M.L."/>
            <person name="Campbell E.W."/>
            <person name="Caoile C."/>
            <person name="Challacombe J.F."/>
            <person name="Chasteen L.A."/>
            <person name="Chertkov O."/>
            <person name="Chi H.C."/>
            <person name="Christensen M."/>
            <person name="Clark L.M."/>
            <person name="Cohn J.D."/>
            <person name="Denys M."/>
            <person name="Detter J.C."/>
            <person name="Dickson M."/>
            <person name="Dimitrijevic-Bussod M."/>
            <person name="Escobar J."/>
            <person name="Fawcett J.J."/>
            <person name="Flowers D."/>
            <person name="Fotopulos D."/>
            <person name="Glavina T."/>
            <person name="Gomez M."/>
            <person name="Gonzales E."/>
            <person name="Goodstein D."/>
            <person name="Goodwin L.A."/>
            <person name="Grady D.L."/>
            <person name="Grigoriev I."/>
            <person name="Groza M."/>
            <person name="Hammon N."/>
            <person name="Hawkins T."/>
            <person name="Haydu L."/>
            <person name="Hildebrand C.E."/>
            <person name="Huang W."/>
            <person name="Israni S."/>
            <person name="Jett J."/>
            <person name="Jewett P.B."/>
            <person name="Kadner K."/>
            <person name="Kimball H."/>
            <person name="Kobayashi A."/>
            <person name="Krawczyk M.-C."/>
            <person name="Leyba T."/>
            <person name="Longmire J.L."/>
            <person name="Lopez F."/>
            <person name="Lou Y."/>
            <person name="Lowry S."/>
            <person name="Ludeman T."/>
            <person name="Manohar C.F."/>
            <person name="Mark G.A."/>
            <person name="McMurray K.L."/>
            <person name="Meincke L.J."/>
            <person name="Morgan J."/>
            <person name="Moyzis R.K."/>
            <person name="Mundt M.O."/>
            <person name="Munk A.C."/>
            <person name="Nandkeshwar R.D."/>
            <person name="Pitluck S."/>
            <person name="Pollard M."/>
            <person name="Predki P."/>
            <person name="Parson-Quintana B."/>
            <person name="Ramirez L."/>
            <person name="Rash S."/>
            <person name="Retterer J."/>
            <person name="Ricke D.O."/>
            <person name="Robinson D.L."/>
            <person name="Rodriguez A."/>
            <person name="Salamov A."/>
            <person name="Saunders E.H."/>
            <person name="Scott D."/>
            <person name="Shough T."/>
            <person name="Stallings R.L."/>
            <person name="Stalvey M."/>
            <person name="Sutherland R.D."/>
            <person name="Tapia R."/>
            <person name="Tesmer J.G."/>
            <person name="Thayer N."/>
            <person name="Thompson L.S."/>
            <person name="Tice H."/>
            <person name="Torney D.C."/>
            <person name="Tran-Gyamfi M."/>
            <person name="Tsai M."/>
            <person name="Ulanovsky L.E."/>
            <person name="Ustaszewska A."/>
            <person name="Vo N."/>
            <person name="White P.S."/>
            <person name="Williams A.L."/>
            <person name="Wills P.L."/>
            <person name="Wu J.-R."/>
            <person name="Wu K."/>
            <person name="Yang J."/>
            <person name="DeJong P."/>
            <person name="Bruce D."/>
            <person name="Doggett N.A."/>
            <person name="Deaven L."/>
            <person name="Schmutz J."/>
            <person name="Grimwood J."/>
            <person name="Richardson P."/>
            <person name="Rokhsar D.S."/>
            <person name="Eichler E.E."/>
            <person name="Gilna P."/>
            <person name="Lucas S.M."/>
            <person name="Myers R.M."/>
            <person name="Rubin E.M."/>
            <person name="Pennacchio L.A."/>
        </authorList>
    </citation>
    <scope>NUCLEOTIDE SEQUENCE [LARGE SCALE GENOMIC DNA]</scope>
</reference>
<reference key="4">
    <citation type="submission" date="2005-07" db="EMBL/GenBank/DDBJ databases">
        <authorList>
            <person name="Mural R.J."/>
            <person name="Istrail S."/>
            <person name="Sutton G."/>
            <person name="Florea L."/>
            <person name="Halpern A.L."/>
            <person name="Mobarry C.M."/>
            <person name="Lippert R."/>
            <person name="Walenz B."/>
            <person name="Shatkay H."/>
            <person name="Dew I."/>
            <person name="Miller J.R."/>
            <person name="Flanigan M.J."/>
            <person name="Edwards N.J."/>
            <person name="Bolanos R."/>
            <person name="Fasulo D."/>
            <person name="Halldorsson B.V."/>
            <person name="Hannenhalli S."/>
            <person name="Turner R."/>
            <person name="Yooseph S."/>
            <person name="Lu F."/>
            <person name="Nusskern D.R."/>
            <person name="Shue B.C."/>
            <person name="Zheng X.H."/>
            <person name="Zhong F."/>
            <person name="Delcher A.L."/>
            <person name="Huson D.H."/>
            <person name="Kravitz S.A."/>
            <person name="Mouchard L."/>
            <person name="Reinert K."/>
            <person name="Remington K.A."/>
            <person name="Clark A.G."/>
            <person name="Waterman M.S."/>
            <person name="Eichler E.E."/>
            <person name="Adams M.D."/>
            <person name="Hunkapiller M.W."/>
            <person name="Myers E.W."/>
            <person name="Venter J.C."/>
        </authorList>
    </citation>
    <scope>NUCLEOTIDE SEQUENCE [LARGE SCALE GENOMIC DNA]</scope>
</reference>
<reference key="5">
    <citation type="journal article" date="2004" name="Genome Res.">
        <title>The status, quality, and expansion of the NIH full-length cDNA project: the Mammalian Gene Collection (MGC).</title>
        <authorList>
            <consortium name="The MGC Project Team"/>
        </authorList>
    </citation>
    <scope>NUCLEOTIDE SEQUENCE [LARGE SCALE MRNA] (ISOFORM 1)</scope>
    <scope>NUCLEOTIDE SEQUENCE [LARGE SCALE MRNA] OF 105-833 (ISOFORM 2)</scope>
    <scope>NUCLEOTIDE SEQUENCE [LARGE SCALE MRNA] OF 106-833 (ISOFORM 3)</scope>
    <scope>VARIANT VAL-391</scope>
    <source>
        <tissue>Brain</tissue>
        <tissue>Muscle</tissue>
        <tissue>Testis</tissue>
    </source>
</reference>
<reference key="6">
    <citation type="journal article" date="1998" name="Genomics">
        <title>Cloning of a novel C-terminal kinesin (KIFC3) that maps to human chromosome 16q13-q21 and thus is a candidate gene for Bardet-Biedl syndrome.</title>
        <authorList>
            <person name="Hoang E.H."/>
            <person name="Whitehead J.L."/>
            <person name="Dose A.C."/>
            <person name="Burnside B."/>
        </authorList>
    </citation>
    <scope>NUCLEOTIDE SEQUENCE [MRNA] OF 86-833 (ISOFORM 2)</scope>
    <source>
        <tissue>Retina</tissue>
    </source>
</reference>
<reference key="7">
    <citation type="journal article" date="2008" name="Cell">
        <title>Anchorage of microtubule minus ends to adherens junctions regulates epithelial cell-cell contacts.</title>
        <authorList>
            <person name="Meng W."/>
            <person name="Mushika Y."/>
            <person name="Ichii T."/>
            <person name="Takeichi M."/>
        </authorList>
    </citation>
    <scope>FUNCTION</scope>
    <scope>SUBCELLULAR LOCATION</scope>
</reference>
<reference key="8">
    <citation type="journal article" date="2013" name="J. Proteome Res.">
        <title>Toward a comprehensive characterization of a human cancer cell phosphoproteome.</title>
        <authorList>
            <person name="Zhou H."/>
            <person name="Di Palma S."/>
            <person name="Preisinger C."/>
            <person name="Peng M."/>
            <person name="Polat A.N."/>
            <person name="Heck A.J."/>
            <person name="Mohammed S."/>
        </authorList>
    </citation>
    <scope>PHOSPHORYLATION [LARGE SCALE ANALYSIS] AT SER-813 AND SER-817</scope>
    <scope>IDENTIFICATION BY MASS SPECTROMETRY [LARGE SCALE ANALYSIS]</scope>
    <source>
        <tissue>Cervix carcinoma</tissue>
        <tissue>Erythroleukemia</tissue>
    </source>
</reference>
<reference key="9">
    <citation type="submission" date="2006-06" db="PDB data bank">
        <title>Crystal structure of the KIFC3 motor domain in complex with ADP.</title>
        <authorList>
            <consortium name="Structural genomics consortium (SGC)"/>
        </authorList>
    </citation>
    <scope>X-RAY CRYSTALLOGRAPHY (1.85 ANGSTROMS) OF 443-770 IN COMPLEX WITH ADP</scope>
</reference>
<keyword id="KW-0002">3D-structure</keyword>
<keyword id="KW-0025">Alternative splicing</keyword>
<keyword id="KW-0067">ATP-binding</keyword>
<keyword id="KW-0965">Cell junction</keyword>
<keyword id="KW-0175">Coiled coil</keyword>
<keyword id="KW-0963">Cytoplasm</keyword>
<keyword id="KW-0968">Cytoplasmic vesicle</keyword>
<keyword id="KW-0206">Cytoskeleton</keyword>
<keyword id="KW-0472">Membrane</keyword>
<keyword id="KW-0493">Microtubule</keyword>
<keyword id="KW-0505">Motor protein</keyword>
<keyword id="KW-0547">Nucleotide-binding</keyword>
<keyword id="KW-0597">Phosphoprotein</keyword>
<keyword id="KW-1267">Proteomics identification</keyword>
<keyword id="KW-1185">Reference proteome</keyword>
<dbReference type="EMBL" id="AK291737">
    <property type="protein sequence ID" value="BAF84426.1"/>
    <property type="molecule type" value="mRNA"/>
</dbReference>
<dbReference type="EMBL" id="AK296995">
    <property type="protein sequence ID" value="BAH12470.1"/>
    <property type="molecule type" value="mRNA"/>
</dbReference>
<dbReference type="EMBL" id="AB209290">
    <property type="protein sequence ID" value="BAD92527.1"/>
    <property type="status" value="ALT_INIT"/>
    <property type="molecule type" value="mRNA"/>
</dbReference>
<dbReference type="EMBL" id="AC010543">
    <property type="status" value="NOT_ANNOTATED_CDS"/>
    <property type="molecule type" value="Genomic_DNA"/>
</dbReference>
<dbReference type="EMBL" id="AC092118">
    <property type="status" value="NOT_ANNOTATED_CDS"/>
    <property type="molecule type" value="Genomic_DNA"/>
</dbReference>
<dbReference type="EMBL" id="FO082293">
    <property type="status" value="NOT_ANNOTATED_CDS"/>
    <property type="molecule type" value="Genomic_DNA"/>
</dbReference>
<dbReference type="EMBL" id="CH471092">
    <property type="protein sequence ID" value="EAW82955.1"/>
    <property type="molecule type" value="Genomic_DNA"/>
</dbReference>
<dbReference type="EMBL" id="BC001211">
    <property type="protein sequence ID" value="AAH01211.2"/>
    <property type="molecule type" value="mRNA"/>
</dbReference>
<dbReference type="EMBL" id="BC008014">
    <property type="protein sequence ID" value="AAH08014.1"/>
    <property type="molecule type" value="mRNA"/>
</dbReference>
<dbReference type="EMBL" id="BC034234">
    <property type="protein sequence ID" value="AAH34234.1"/>
    <property type="status" value="ALT_INIT"/>
    <property type="molecule type" value="mRNA"/>
</dbReference>
<dbReference type="EMBL" id="BC041132">
    <property type="protein sequence ID" value="AAH41132.1"/>
    <property type="status" value="ALT_INIT"/>
    <property type="molecule type" value="mRNA"/>
</dbReference>
<dbReference type="EMBL" id="BC047051">
    <property type="protein sequence ID" value="AAH47051.1"/>
    <property type="status" value="ALT_SEQ"/>
    <property type="molecule type" value="mRNA"/>
</dbReference>
<dbReference type="EMBL" id="AF004426">
    <property type="protein sequence ID" value="AAC24153.1"/>
    <property type="molecule type" value="mRNA"/>
</dbReference>
<dbReference type="CCDS" id="CCDS10789.2">
    <molecule id="Q9BVG8-3"/>
</dbReference>
<dbReference type="CCDS" id="CCDS45493.1">
    <molecule id="Q9BVG8-2"/>
</dbReference>
<dbReference type="CCDS" id="CCDS45494.1">
    <molecule id="Q9BVG8-5"/>
</dbReference>
<dbReference type="CCDS" id="CCDS81989.1">
    <molecule id="Q9BVG8-6"/>
</dbReference>
<dbReference type="RefSeq" id="NP_001123571.1">
    <molecule id="Q9BVG8-5"/>
    <property type="nucleotide sequence ID" value="NM_001130099.1"/>
</dbReference>
<dbReference type="RefSeq" id="NP_001123572.1">
    <molecule id="Q9BVG8-2"/>
    <property type="nucleotide sequence ID" value="NM_001130100.2"/>
</dbReference>
<dbReference type="RefSeq" id="NP_001305639.1">
    <molecule id="Q9BVG8-6"/>
    <property type="nucleotide sequence ID" value="NM_001318710.2"/>
</dbReference>
<dbReference type="RefSeq" id="NP_001305640.1">
    <property type="nucleotide sequence ID" value="NM_001318711.1"/>
</dbReference>
<dbReference type="RefSeq" id="NP_001305641.1">
    <property type="nucleotide sequence ID" value="NM_001318712.1"/>
</dbReference>
<dbReference type="RefSeq" id="NP_001305642.1">
    <property type="nucleotide sequence ID" value="NM_001318713.1"/>
</dbReference>
<dbReference type="RefSeq" id="NP_001305643.1">
    <molecule id="Q9BVG8-5"/>
    <property type="nucleotide sequence ID" value="NM_001318714.2"/>
</dbReference>
<dbReference type="RefSeq" id="NP_001305644.1">
    <molecule id="Q9BVG8-5"/>
    <property type="nucleotide sequence ID" value="NM_001318715.2"/>
</dbReference>
<dbReference type="RefSeq" id="NP_005541.3">
    <molecule id="Q9BVG8-3"/>
    <property type="nucleotide sequence ID" value="NM_005550.3"/>
</dbReference>
<dbReference type="RefSeq" id="XP_047290040.1">
    <molecule id="Q9BVG8-3"/>
    <property type="nucleotide sequence ID" value="XM_047434084.1"/>
</dbReference>
<dbReference type="RefSeq" id="XP_054236269.1">
    <molecule id="Q9BVG8-3"/>
    <property type="nucleotide sequence ID" value="XM_054380294.1"/>
</dbReference>
<dbReference type="PDB" id="5WDE">
    <property type="method" value="X-ray"/>
    <property type="resolution" value="1.85 A"/>
    <property type="chains" value="A=443-770"/>
</dbReference>
<dbReference type="PDBsum" id="5WDE"/>
<dbReference type="SMR" id="Q9BVG8"/>
<dbReference type="BioGRID" id="110002">
    <property type="interactions" value="258"/>
</dbReference>
<dbReference type="DIP" id="DIP-52406N"/>
<dbReference type="FunCoup" id="Q9BVG8">
    <property type="interactions" value="423"/>
</dbReference>
<dbReference type="IntAct" id="Q9BVG8">
    <property type="interactions" value="253"/>
</dbReference>
<dbReference type="MINT" id="Q9BVG8"/>
<dbReference type="STRING" id="9606.ENSP00000442008"/>
<dbReference type="ChEMBL" id="CHEMBL1075119"/>
<dbReference type="GlyGen" id="Q9BVG8">
    <property type="glycosylation" value="1 site"/>
</dbReference>
<dbReference type="iPTMnet" id="Q9BVG8"/>
<dbReference type="PhosphoSitePlus" id="Q9BVG8"/>
<dbReference type="BioMuta" id="KIFC3"/>
<dbReference type="DMDM" id="357529584"/>
<dbReference type="jPOST" id="Q9BVG8"/>
<dbReference type="MassIVE" id="Q9BVG8"/>
<dbReference type="PaxDb" id="9606-ENSP00000368976"/>
<dbReference type="PeptideAtlas" id="Q9BVG8"/>
<dbReference type="ProteomicsDB" id="6579"/>
<dbReference type="ProteomicsDB" id="79201">
    <molecule id="Q9BVG8-3"/>
</dbReference>
<dbReference type="ProteomicsDB" id="79202">
    <molecule id="Q9BVG8-2"/>
</dbReference>
<dbReference type="ProteomicsDB" id="79203">
    <molecule id="Q9BVG8-4"/>
</dbReference>
<dbReference type="ProteomicsDB" id="79204">
    <molecule id="Q9BVG8-5"/>
</dbReference>
<dbReference type="Antibodypedia" id="15192">
    <property type="antibodies" value="94 antibodies from 25 providers"/>
</dbReference>
<dbReference type="DNASU" id="3801"/>
<dbReference type="Ensembl" id="ENST00000379655.8">
    <molecule id="Q9BVG8-3"/>
    <property type="protein sequence ID" value="ENSP00000368976.4"/>
    <property type="gene ID" value="ENSG00000140859.16"/>
</dbReference>
<dbReference type="Ensembl" id="ENST00000421376.6">
    <molecule id="Q9BVG8-5"/>
    <property type="protein sequence ID" value="ENSP00000396399.2"/>
    <property type="gene ID" value="ENSG00000140859.16"/>
</dbReference>
<dbReference type="Ensembl" id="ENST00000445690.7">
    <molecule id="Q9BVG8-2"/>
    <property type="protein sequence ID" value="ENSP00000401696.2"/>
    <property type="gene ID" value="ENSG00000140859.16"/>
</dbReference>
<dbReference type="Ensembl" id="ENST00000465878.6">
    <molecule id="Q9BVG8-5"/>
    <property type="protein sequence ID" value="ENSP00000454659.1"/>
    <property type="gene ID" value="ENSG00000140859.16"/>
</dbReference>
<dbReference type="Ensembl" id="ENST00000541240.5">
    <molecule id="Q9BVG8-6"/>
    <property type="protein sequence ID" value="ENSP00000442008.1"/>
    <property type="gene ID" value="ENSG00000140859.16"/>
</dbReference>
<dbReference type="Ensembl" id="ENST00000562903.5">
    <molecule id="Q9BVG8-5"/>
    <property type="protein sequence ID" value="ENSP00000456239.1"/>
    <property type="gene ID" value="ENSG00000140859.16"/>
</dbReference>
<dbReference type="GeneID" id="3801"/>
<dbReference type="KEGG" id="hsa:3801"/>
<dbReference type="MANE-Select" id="ENST00000445690.7">
    <molecule id="Q9BVG8-2"/>
    <property type="protein sequence ID" value="ENSP00000401696.2"/>
    <property type="RefSeq nucleotide sequence ID" value="NM_001130100.2"/>
    <property type="RefSeq protein sequence ID" value="NP_001123572.1"/>
</dbReference>
<dbReference type="UCSC" id="uc002emm.4">
    <molecule id="Q9BVG8-3"/>
    <property type="organism name" value="human"/>
</dbReference>
<dbReference type="AGR" id="HGNC:6326"/>
<dbReference type="CTD" id="3801"/>
<dbReference type="DisGeNET" id="3801"/>
<dbReference type="GeneCards" id="KIFC3"/>
<dbReference type="HGNC" id="HGNC:6326">
    <property type="gene designation" value="KIFC3"/>
</dbReference>
<dbReference type="HPA" id="ENSG00000140859">
    <property type="expression patterns" value="Tissue enhanced (kidney)"/>
</dbReference>
<dbReference type="MIM" id="604535">
    <property type="type" value="gene"/>
</dbReference>
<dbReference type="neXtProt" id="NX_Q9BVG8"/>
<dbReference type="OpenTargets" id="ENSG00000140859"/>
<dbReference type="PharmGKB" id="PA30112"/>
<dbReference type="VEuPathDB" id="HostDB:ENSG00000140859"/>
<dbReference type="eggNOG" id="KOG0239">
    <property type="taxonomic scope" value="Eukaryota"/>
</dbReference>
<dbReference type="GeneTree" id="ENSGT00940000154022"/>
<dbReference type="HOGENOM" id="CLU_001485_12_6_1"/>
<dbReference type="InParanoid" id="Q9BVG8"/>
<dbReference type="OMA" id="RHDMQKC"/>
<dbReference type="OrthoDB" id="3176171at2759"/>
<dbReference type="PAN-GO" id="Q9BVG8">
    <property type="GO annotations" value="3 GO annotations based on evolutionary models"/>
</dbReference>
<dbReference type="TreeFam" id="TF105238"/>
<dbReference type="PathwayCommons" id="Q9BVG8"/>
<dbReference type="Reactome" id="R-HSA-390471">
    <molecule id="Q9BVG8-2"/>
    <property type="pathway name" value="Association of TriC/CCT with target proteins during biosynthesis"/>
</dbReference>
<dbReference type="SignaLink" id="Q9BVG8"/>
<dbReference type="BioGRID-ORCS" id="3801">
    <property type="hits" value="4 hits in 1151 CRISPR screens"/>
</dbReference>
<dbReference type="ChiTaRS" id="KIFC3">
    <property type="organism name" value="human"/>
</dbReference>
<dbReference type="GeneWiki" id="KIFC3"/>
<dbReference type="GenomeRNAi" id="3801"/>
<dbReference type="Pharos" id="Q9BVG8">
    <property type="development level" value="Tbio"/>
</dbReference>
<dbReference type="PRO" id="PR:Q9BVG8"/>
<dbReference type="Proteomes" id="UP000005640">
    <property type="component" value="Chromosome 16"/>
</dbReference>
<dbReference type="RNAct" id="Q9BVG8">
    <property type="molecule type" value="protein"/>
</dbReference>
<dbReference type="Bgee" id="ENSG00000140859">
    <property type="expression patterns" value="Expressed in metanephros cortex and 144 other cell types or tissues"/>
</dbReference>
<dbReference type="ExpressionAtlas" id="Q9BVG8">
    <property type="expression patterns" value="baseline and differential"/>
</dbReference>
<dbReference type="GO" id="GO:0005813">
    <property type="term" value="C:centrosome"/>
    <property type="evidence" value="ECO:0000314"/>
    <property type="project" value="UniProtKB"/>
</dbReference>
<dbReference type="GO" id="GO:0030659">
    <property type="term" value="C:cytoplasmic vesicle membrane"/>
    <property type="evidence" value="ECO:0007669"/>
    <property type="project" value="UniProtKB-SubCell"/>
</dbReference>
<dbReference type="GO" id="GO:0070062">
    <property type="term" value="C:extracellular exosome"/>
    <property type="evidence" value="ECO:0007005"/>
    <property type="project" value="UniProtKB"/>
</dbReference>
<dbReference type="GO" id="GO:0005794">
    <property type="term" value="C:Golgi apparatus"/>
    <property type="evidence" value="ECO:0007669"/>
    <property type="project" value="Ensembl"/>
</dbReference>
<dbReference type="GO" id="GO:0005871">
    <property type="term" value="C:kinesin complex"/>
    <property type="evidence" value="ECO:0000304"/>
    <property type="project" value="ProtInc"/>
</dbReference>
<dbReference type="GO" id="GO:0005874">
    <property type="term" value="C:microtubule"/>
    <property type="evidence" value="ECO:0007669"/>
    <property type="project" value="UniProtKB-KW"/>
</dbReference>
<dbReference type="GO" id="GO:0015630">
    <property type="term" value="C:microtubule cytoskeleton"/>
    <property type="evidence" value="ECO:0000318"/>
    <property type="project" value="GO_Central"/>
</dbReference>
<dbReference type="GO" id="GO:0005739">
    <property type="term" value="C:mitochondrion"/>
    <property type="evidence" value="ECO:0006056"/>
    <property type="project" value="FlyBase"/>
</dbReference>
<dbReference type="GO" id="GO:0005915">
    <property type="term" value="C:zonula adherens"/>
    <property type="evidence" value="ECO:0000314"/>
    <property type="project" value="UniProtKB"/>
</dbReference>
<dbReference type="GO" id="GO:0005524">
    <property type="term" value="F:ATP binding"/>
    <property type="evidence" value="ECO:0007669"/>
    <property type="project" value="UniProtKB-KW"/>
</dbReference>
<dbReference type="GO" id="GO:0042802">
    <property type="term" value="F:identical protein binding"/>
    <property type="evidence" value="ECO:0000353"/>
    <property type="project" value="IntAct"/>
</dbReference>
<dbReference type="GO" id="GO:0008017">
    <property type="term" value="F:microtubule binding"/>
    <property type="evidence" value="ECO:0000318"/>
    <property type="project" value="GO_Central"/>
</dbReference>
<dbReference type="GO" id="GO:0003777">
    <property type="term" value="F:microtubule motor activity"/>
    <property type="evidence" value="ECO:0000304"/>
    <property type="project" value="ProtInc"/>
</dbReference>
<dbReference type="GO" id="GO:0090136">
    <property type="term" value="P:epithelial cell-cell adhesion"/>
    <property type="evidence" value="ECO:0000315"/>
    <property type="project" value="UniProtKB"/>
</dbReference>
<dbReference type="GO" id="GO:0007030">
    <property type="term" value="P:Golgi organization"/>
    <property type="evidence" value="ECO:0007669"/>
    <property type="project" value="Ensembl"/>
</dbReference>
<dbReference type="GO" id="GO:0007018">
    <property type="term" value="P:microtubule-based movement"/>
    <property type="evidence" value="ECO:0007669"/>
    <property type="project" value="InterPro"/>
</dbReference>
<dbReference type="GO" id="GO:0007017">
    <property type="term" value="P:microtubule-based process"/>
    <property type="evidence" value="ECO:0000318"/>
    <property type="project" value="GO_Central"/>
</dbReference>
<dbReference type="GO" id="GO:0007601">
    <property type="term" value="P:visual perception"/>
    <property type="evidence" value="ECO:0000304"/>
    <property type="project" value="ProtInc"/>
</dbReference>
<dbReference type="GO" id="GO:0045218">
    <property type="term" value="P:zonula adherens maintenance"/>
    <property type="evidence" value="ECO:0000315"/>
    <property type="project" value="UniProtKB"/>
</dbReference>
<dbReference type="CDD" id="cd01366">
    <property type="entry name" value="KISc_C_terminal"/>
    <property type="match status" value="1"/>
</dbReference>
<dbReference type="FunFam" id="3.40.850.10:FF:000022">
    <property type="entry name" value="Kinesin-like protein"/>
    <property type="match status" value="1"/>
</dbReference>
<dbReference type="Gene3D" id="1.10.287.1490">
    <property type="match status" value="1"/>
</dbReference>
<dbReference type="Gene3D" id="3.40.850.10">
    <property type="entry name" value="Kinesin motor domain"/>
    <property type="match status" value="1"/>
</dbReference>
<dbReference type="InterPro" id="IPR027640">
    <property type="entry name" value="Kinesin-like_fam"/>
</dbReference>
<dbReference type="InterPro" id="IPR019821">
    <property type="entry name" value="Kinesin_motor_CS"/>
</dbReference>
<dbReference type="InterPro" id="IPR001752">
    <property type="entry name" value="Kinesin_motor_dom"/>
</dbReference>
<dbReference type="InterPro" id="IPR036961">
    <property type="entry name" value="Kinesin_motor_dom_sf"/>
</dbReference>
<dbReference type="InterPro" id="IPR027417">
    <property type="entry name" value="P-loop_NTPase"/>
</dbReference>
<dbReference type="PANTHER" id="PTHR47972:SF5">
    <property type="entry name" value="KINESIN-LIKE PROTEIN KIFC3"/>
    <property type="match status" value="1"/>
</dbReference>
<dbReference type="PANTHER" id="PTHR47972">
    <property type="entry name" value="KINESIN-LIKE PROTEIN KLP-3"/>
    <property type="match status" value="1"/>
</dbReference>
<dbReference type="Pfam" id="PF00225">
    <property type="entry name" value="Kinesin"/>
    <property type="match status" value="1"/>
</dbReference>
<dbReference type="PRINTS" id="PR00380">
    <property type="entry name" value="KINESINHEAVY"/>
</dbReference>
<dbReference type="SMART" id="SM00129">
    <property type="entry name" value="KISc"/>
    <property type="match status" value="1"/>
</dbReference>
<dbReference type="SUPFAM" id="SSF52540">
    <property type="entry name" value="P-loop containing nucleoside triphosphate hydrolases"/>
    <property type="match status" value="1"/>
</dbReference>
<dbReference type="PROSITE" id="PS00411">
    <property type="entry name" value="KINESIN_MOTOR_1"/>
    <property type="match status" value="1"/>
</dbReference>
<dbReference type="PROSITE" id="PS50067">
    <property type="entry name" value="KINESIN_MOTOR_2"/>
    <property type="match status" value="1"/>
</dbReference>
<accession>Q9BVG8</accession>
<accession>A8K6S2</accession>
<accession>B7Z484</accession>
<accession>O75299</accession>
<accession>Q49A29</accession>
<accession>Q49AQ0</accession>
<accession>Q59G19</accession>
<accession>Q8IUT3</accession>
<accession>Q96HW6</accession>
<organism>
    <name type="scientific">Homo sapiens</name>
    <name type="common">Human</name>
    <dbReference type="NCBI Taxonomy" id="9606"/>
    <lineage>
        <taxon>Eukaryota</taxon>
        <taxon>Metazoa</taxon>
        <taxon>Chordata</taxon>
        <taxon>Craniata</taxon>
        <taxon>Vertebrata</taxon>
        <taxon>Euteleostomi</taxon>
        <taxon>Mammalia</taxon>
        <taxon>Eutheria</taxon>
        <taxon>Euarchontoglires</taxon>
        <taxon>Primates</taxon>
        <taxon>Haplorrhini</taxon>
        <taxon>Catarrhini</taxon>
        <taxon>Hominidae</taxon>
        <taxon>Homo</taxon>
    </lineage>
</organism>
<feature type="chain" id="PRO_0000125431" description="Kinesin-like protein KIFC3">
    <location>
        <begin position="1"/>
        <end position="833"/>
    </location>
</feature>
<feature type="domain" description="Kinesin motor" evidence="3">
    <location>
        <begin position="445"/>
        <end position="768"/>
    </location>
</feature>
<feature type="region of interest" description="Disordered" evidence="4">
    <location>
        <begin position="19"/>
        <end position="74"/>
    </location>
</feature>
<feature type="region of interest" description="Disordered" evidence="4">
    <location>
        <begin position="786"/>
        <end position="833"/>
    </location>
</feature>
<feature type="coiled-coil region" evidence="2">
    <location>
        <begin position="102"/>
        <end position="362"/>
    </location>
</feature>
<feature type="coiled-coil region" evidence="2">
    <location>
        <begin position="395"/>
        <end position="432"/>
    </location>
</feature>
<feature type="compositionally biased region" description="Low complexity" evidence="4">
    <location>
        <begin position="30"/>
        <end position="48"/>
    </location>
</feature>
<feature type="compositionally biased region" description="Polar residues" evidence="4">
    <location>
        <begin position="806"/>
        <end position="815"/>
    </location>
</feature>
<feature type="binding site">
    <location>
        <begin position="528"/>
        <end position="535"/>
    </location>
    <ligand>
        <name>ATP</name>
        <dbReference type="ChEBI" id="CHEBI:30616"/>
    </ligand>
</feature>
<feature type="modified residue" description="Phosphoserine" evidence="12">
    <location>
        <position position="813"/>
    </location>
</feature>
<feature type="modified residue" description="Phosphoserine" evidence="12">
    <location>
        <position position="817"/>
    </location>
</feature>
<feature type="splice variant" id="VSP_043724" description="In isoform 4." evidence="7">
    <location>
        <begin position="1"/>
        <end position="139"/>
    </location>
</feature>
<feature type="splice variant" id="VSP_057224" description="In isoform 5." evidence="7">
    <original>M</original>
    <variation>MCASACKDTAAWCPEEAAEPQAM</variation>
    <location>
        <position position="1"/>
    </location>
</feature>
<feature type="splice variant" id="VSP_022361" description="In isoform 3." evidence="8">
    <original>FEFGHTNRTTEF</original>
    <variation>WRREPLTTATLL</variation>
    <location>
        <begin position="626"/>
        <end position="637"/>
    </location>
</feature>
<feature type="splice variant" id="VSP_022362" description="In isoform 3." evidence="8">
    <location>
        <begin position="638"/>
        <end position="833"/>
    </location>
</feature>
<feature type="splice variant" id="VSP_021018" description="In isoform 2, isoform 4 and isoform 5." evidence="7 8 9 10">
    <original>GKSRPLPV</original>
    <variation>A</variation>
    <location>
        <begin position="826"/>
        <end position="833"/>
    </location>
</feature>
<feature type="sequence variant" id="VAR_028114" description="In dbSNP:rs17854089." evidence="5">
    <original>G</original>
    <variation>V</variation>
    <location>
        <position position="391"/>
    </location>
</feature>
<feature type="sequence conflict" description="In Ref. 6; AAC24153." evidence="11" ref="6">
    <original>M</original>
    <variation>L</variation>
    <location>
        <position position="150"/>
    </location>
</feature>
<feature type="sequence conflict" description="In Ref. 5; AAH34234." evidence="11" ref="5">
    <original>S</original>
    <variation>P</variation>
    <location>
        <position position="185"/>
    </location>
</feature>
<feature type="sequence conflict" description="In Ref. 5; AAH08014." evidence="11" ref="5">
    <original>H</original>
    <variation>S</variation>
    <location>
        <position position="281"/>
    </location>
</feature>
<feature type="sequence conflict" description="In Ref. 5; AAH34234." evidence="11" ref="5">
    <original>D</original>
    <variation>G</variation>
    <location>
        <position position="736"/>
    </location>
</feature>
<feature type="strand" evidence="13">
    <location>
        <begin position="446"/>
        <end position="452"/>
    </location>
</feature>
<feature type="helix" evidence="13">
    <location>
        <begin position="457"/>
        <end position="459"/>
    </location>
</feature>
<feature type="helix" evidence="13">
    <location>
        <begin position="463"/>
        <end position="465"/>
    </location>
</feature>
<feature type="strand" evidence="13">
    <location>
        <begin position="469"/>
        <end position="471"/>
    </location>
</feature>
<feature type="strand" evidence="13">
    <location>
        <begin position="478"/>
        <end position="483"/>
    </location>
</feature>
<feature type="strand" evidence="13">
    <location>
        <begin position="486"/>
        <end position="491"/>
    </location>
</feature>
<feature type="strand" evidence="13">
    <location>
        <begin position="493"/>
        <end position="496"/>
    </location>
</feature>
<feature type="helix" evidence="13">
    <location>
        <begin position="502"/>
        <end position="506"/>
    </location>
</feature>
<feature type="turn" evidence="13">
    <location>
        <begin position="507"/>
        <end position="509"/>
    </location>
</feature>
<feature type="helix" evidence="13">
    <location>
        <begin position="510"/>
        <end position="517"/>
    </location>
</feature>
<feature type="strand" evidence="13">
    <location>
        <begin position="522"/>
        <end position="528"/>
    </location>
</feature>
<feature type="helix" evidence="13">
    <location>
        <begin position="534"/>
        <end position="538"/>
    </location>
</feature>
<feature type="strand" evidence="13">
    <location>
        <begin position="542"/>
        <end position="545"/>
    </location>
</feature>
<feature type="helix" evidence="13">
    <location>
        <begin position="547"/>
        <end position="560"/>
    </location>
</feature>
<feature type="strand" evidence="13">
    <location>
        <begin position="566"/>
        <end position="578"/>
    </location>
</feature>
<feature type="strand" evidence="13">
    <location>
        <begin position="581"/>
        <end position="584"/>
    </location>
</feature>
<feature type="helix" evidence="13">
    <location>
        <begin position="619"/>
        <end position="632"/>
    </location>
</feature>
<feature type="helix" evidence="13">
    <location>
        <begin position="644"/>
        <end position="646"/>
    </location>
</feature>
<feature type="strand" evidence="13">
    <location>
        <begin position="647"/>
        <end position="659"/>
    </location>
</feature>
<feature type="turn" evidence="13">
    <location>
        <begin position="660"/>
        <end position="662"/>
    </location>
</feature>
<feature type="strand" evidence="13">
    <location>
        <begin position="665"/>
        <end position="674"/>
    </location>
</feature>
<feature type="helix" evidence="13">
    <location>
        <begin position="689"/>
        <end position="712"/>
    </location>
</feature>
<feature type="helix" evidence="13">
    <location>
        <begin position="720"/>
        <end position="722"/>
    </location>
</feature>
<feature type="helix" evidence="13">
    <location>
        <begin position="724"/>
        <end position="728"/>
    </location>
</feature>
<feature type="helix" evidence="13">
    <location>
        <begin position="730"/>
        <end position="732"/>
    </location>
</feature>
<feature type="strand" evidence="13">
    <location>
        <begin position="738"/>
        <end position="745"/>
    </location>
</feature>
<feature type="helix" evidence="13">
    <location>
        <begin position="749"/>
        <end position="751"/>
    </location>
</feature>
<feature type="helix" evidence="13">
    <location>
        <begin position="752"/>
        <end position="765"/>
    </location>
</feature>
<proteinExistence type="evidence at protein level"/>
<name>KIFC3_HUMAN</name>
<comment type="function">
    <text evidence="1 6">Minus-end microtubule-dependent motor protein. Involved in apically targeted transport (By similarity). Required for zonula adherens maintenance.</text>
</comment>
<comment type="interaction">
    <interactant intactId="EBI-2125614">
        <id>Q9BVG8</id>
    </interactant>
    <interactant intactId="EBI-743598">
        <id>Q9NYB9</id>
        <label>ABI2</label>
    </interactant>
    <organismsDiffer>false</organismsDiffer>
    <experiments>5</experiments>
</comment>
<comment type="interaction">
    <interactant intactId="EBI-2125614">
        <id>Q9BVG8</id>
    </interactant>
    <interactant intactId="EBI-8643161">
        <id>Q9NX04</id>
        <label>AIRIM</label>
    </interactant>
    <organismsDiffer>false</organismsDiffer>
    <experiments>4</experiments>
</comment>
<comment type="interaction">
    <interactant intactId="EBI-2125614">
        <id>Q9BVG8</id>
    </interactant>
    <interactant intactId="EBI-1170906">
        <id>P15336</id>
        <label>ATF2</label>
    </interactant>
    <organismsDiffer>false</organismsDiffer>
    <experiments>3</experiments>
</comment>
<comment type="interaction">
    <interactant intactId="EBI-2125614">
        <id>Q9BVG8</id>
    </interactant>
    <interactant intactId="EBI-765407">
        <id>P41182</id>
        <label>BCL6</label>
    </interactant>
    <organismsDiffer>false</organismsDiffer>
    <experiments>3</experiments>
</comment>
<comment type="interaction">
    <interactant intactId="EBI-2125614">
        <id>Q9BVG8</id>
    </interactant>
    <interactant intactId="EBI-712912">
        <id>Q9HC52</id>
        <label>CBX8</label>
    </interactant>
    <organismsDiffer>false</organismsDiffer>
    <experiments>3</experiments>
</comment>
<comment type="interaction">
    <interactant intactId="EBI-2125614">
        <id>Q9BVG8</id>
    </interactant>
    <interactant intactId="EBI-741724">
        <id>Q8NA61</id>
        <label>CBY2</label>
    </interactant>
    <organismsDiffer>false</organismsDiffer>
    <experiments>5</experiments>
</comment>
<comment type="interaction">
    <interactant intactId="EBI-2125614">
        <id>Q9BVG8</id>
    </interactant>
    <interactant intactId="EBI-10171570">
        <id>Q68D86</id>
        <label>CCDC102B</label>
    </interactant>
    <organismsDiffer>false</organismsDiffer>
    <experiments>3</experiments>
</comment>
<comment type="interaction">
    <interactant intactId="EBI-2125614">
        <id>Q9BVG8</id>
    </interactant>
    <interactant intactId="EBI-10171416">
        <id>Q96JN2-2</id>
        <label>CCDC136</label>
    </interactant>
    <organismsDiffer>false</organismsDiffer>
    <experiments>3</experiments>
</comment>
<comment type="interaction">
    <interactant intactId="EBI-2125614">
        <id>Q9BVG8</id>
    </interactant>
    <interactant intactId="EBI-10258115">
        <id>Q7Z6N9</id>
        <label>CCDC28A</label>
    </interactant>
    <organismsDiffer>false</organismsDiffer>
    <experiments>3</experiments>
</comment>
<comment type="interaction">
    <interactant intactId="EBI-2125614">
        <id>Q9BVG8</id>
    </interactant>
    <interactant intactId="EBI-355471">
        <id>Q8IWP9</id>
        <label>CCDC28A</label>
    </interactant>
    <organismsDiffer>false</organismsDiffer>
    <experiments>3</experiments>
</comment>
<comment type="interaction">
    <interactant intactId="EBI-2125614">
        <id>Q9BVG8</id>
    </interactant>
    <interactant intactId="EBI-746238">
        <id>Q07002</id>
        <label>CDK18</label>
    </interactant>
    <organismsDiffer>false</organismsDiffer>
    <experiments>3</experiments>
</comment>
<comment type="interaction">
    <interactant intactId="EBI-2125614">
        <id>Q9BVG8</id>
    </interactant>
    <interactant intactId="EBI-1181367">
        <id>Q01850</id>
        <label>CDR2</label>
    </interactant>
    <organismsDiffer>false</organismsDiffer>
    <experiments>3</experiments>
</comment>
<comment type="interaction">
    <interactant intactId="EBI-2125614">
        <id>Q9BVG8</id>
    </interactant>
    <interactant intactId="EBI-743488">
        <id>Q96L14</id>
        <label>CEP170P1</label>
    </interactant>
    <organismsDiffer>false</organismsDiffer>
    <experiments>6</experiments>
</comment>
<comment type="interaction">
    <interactant intactId="EBI-2125614">
        <id>Q9BVG8</id>
    </interactant>
    <interactant intactId="EBI-747776">
        <id>Q53EZ4</id>
        <label>CEP55</label>
    </interactant>
    <organismsDiffer>false</organismsDiffer>
    <experiments>3</experiments>
</comment>
<comment type="interaction">
    <interactant intactId="EBI-2125614">
        <id>Q9BVG8</id>
    </interactant>
    <interactant intactId="EBI-10181988">
        <id>Q8IYX8-2</id>
        <label>CEP57L1</label>
    </interactant>
    <organismsDiffer>false</organismsDiffer>
    <experiments>3</experiments>
</comment>
<comment type="interaction">
    <interactant intactId="EBI-2125614">
        <id>Q9BVG8</id>
    </interactant>
    <interactant intactId="EBI-5655540">
        <id>Q8N3C7</id>
        <label>CLIP4</label>
    </interactant>
    <organismsDiffer>false</organismsDiffer>
    <experiments>3</experiments>
</comment>
<comment type="interaction">
    <interactant intactId="EBI-2125614">
        <id>Q9BVG8</id>
    </interactant>
    <interactant intactId="EBI-10192698">
        <id>Q02930-3</id>
        <label>CREB5</label>
    </interactant>
    <organismsDiffer>false</organismsDiffer>
    <experiments>3</experiments>
</comment>
<comment type="interaction">
    <interactant intactId="EBI-2125614">
        <id>Q9BVG8</id>
    </interactant>
    <interactant intactId="EBI-10277443">
        <id>Q8WWE8</id>
        <label>CYTH4</label>
    </interactant>
    <organismsDiffer>false</organismsDiffer>
    <experiments>3</experiments>
</comment>
<comment type="interaction">
    <interactant intactId="EBI-2125614">
        <id>Q9BVG8</id>
    </interactant>
    <interactant intactId="EBI-715074">
        <id>Q13561</id>
        <label>DCTN2</label>
    </interactant>
    <organismsDiffer>false</organismsDiffer>
    <experiments>3</experiments>
</comment>
<comment type="interaction">
    <interactant intactId="EBI-2125614">
        <id>Q9BVG8</id>
    </interactant>
    <interactant intactId="EBI-8646694">
        <id>O43602</id>
        <label>DCX</label>
    </interactant>
    <organismsDiffer>false</organismsDiffer>
    <experiments>3</experiments>
</comment>
<comment type="interaction">
    <interactant intactId="EBI-2125614">
        <id>Q9BVG8</id>
    </interactant>
    <interactant intactId="EBI-748597">
        <id>Q05D60</id>
        <label>DEUP1</label>
    </interactant>
    <organismsDiffer>false</organismsDiffer>
    <experiments>3</experiments>
</comment>
<comment type="interaction">
    <interactant intactId="EBI-2125614">
        <id>Q9BVG8</id>
    </interactant>
    <interactant intactId="EBI-465804">
        <id>Q96EV8</id>
        <label>DTNBP1</label>
    </interactant>
    <organismsDiffer>false</organismsDiffer>
    <experiments>3</experiments>
</comment>
<comment type="interaction">
    <interactant intactId="EBI-2125614">
        <id>Q9BVG8</id>
    </interactant>
    <interactant intactId="EBI-2834260">
        <id>P62508</id>
        <label>ESRRG</label>
    </interactant>
    <organismsDiffer>false</organismsDiffer>
    <experiments>3</experiments>
</comment>
<comment type="interaction">
    <interactant intactId="EBI-2125614">
        <id>Q9BVG8</id>
    </interactant>
    <interactant intactId="EBI-744506">
        <id>Q86V42</id>
        <label>FAM124A</label>
    </interactant>
    <organismsDiffer>false</organismsDiffer>
    <experiments>3</experiments>
</comment>
<comment type="interaction">
    <interactant intactId="EBI-2125614">
        <id>Q9BVG8</id>
    </interactant>
    <interactant intactId="EBI-2339898">
        <id>Q9NW38</id>
        <label>FANCL</label>
    </interactant>
    <organismsDiffer>false</organismsDiffer>
    <experiments>3</experiments>
</comment>
<comment type="interaction">
    <interactant intactId="EBI-2125614">
        <id>Q9BVG8</id>
    </interactant>
    <interactant intactId="EBI-1215612">
        <id>O94868</id>
        <label>FCHSD2</label>
    </interactant>
    <organismsDiffer>false</organismsDiffer>
    <experiments>3</experiments>
</comment>
<comment type="interaction">
    <interactant intactId="EBI-2125614">
        <id>Q9BVG8</id>
    </interactant>
    <interactant intactId="EBI-10172181">
        <id>Q53SE7</id>
        <label>FLJ13057</label>
    </interactant>
    <organismsDiffer>false</organismsDiffer>
    <experiments>3</experiments>
</comment>
<comment type="interaction">
    <interactant intactId="EBI-2125614">
        <id>Q9BVG8</id>
    </interactant>
    <interactant intactId="EBI-618309">
        <id>Q08379</id>
        <label>GOLGA2</label>
    </interactant>
    <organismsDiffer>false</organismsDiffer>
    <experiments>3</experiments>
</comment>
<comment type="interaction">
    <interactant intactId="EBI-2125614">
        <id>Q9BVG8</id>
    </interactant>
    <interactant intactId="EBI-739467">
        <id>Q9H8Y8</id>
        <label>GORASP2</label>
    </interactant>
    <organismsDiffer>false</organismsDiffer>
    <experiments>3</experiments>
</comment>
<comment type="interaction">
    <interactant intactId="EBI-2125614">
        <id>Q9BVG8</id>
    </interactant>
    <interactant intactId="EBI-2514791">
        <id>Q96CS2</id>
        <label>HAUS1</label>
    </interactant>
    <organismsDiffer>false</organismsDiffer>
    <experiments>3</experiments>
</comment>
<comment type="interaction">
    <interactant intactId="EBI-2125614">
        <id>Q9BVG8</id>
    </interactant>
    <interactant intactId="EBI-748664">
        <id>O75506</id>
        <label>HSBP1</label>
    </interactant>
    <organismsDiffer>false</organismsDiffer>
    <experiments>5</experiments>
</comment>
<comment type="interaction">
    <interactant intactId="EBI-2125614">
        <id>Q9BVG8</id>
    </interactant>
    <interactant intactId="EBI-10269733">
        <id>Q8NDH6</id>
        <label>ICA1L</label>
    </interactant>
    <organismsDiffer>false</organismsDiffer>
    <experiments>3</experiments>
</comment>
<comment type="interaction">
    <interactant intactId="EBI-2125614">
        <id>Q9BVG8</id>
    </interactant>
    <interactant intactId="EBI-712105">
        <id>Q13352</id>
        <label>ITGB3BP</label>
    </interactant>
    <organismsDiffer>false</organismsDiffer>
    <experiments>3</experiments>
</comment>
<comment type="interaction">
    <interactant intactId="EBI-2125614">
        <id>Q9BVG8</id>
    </interactant>
    <interactant intactId="EBI-10175826">
        <id>Q13352-5</id>
        <label>ITGB3BP</label>
    </interactant>
    <organismsDiffer>false</organismsDiffer>
    <experiments>3</experiments>
</comment>
<comment type="interaction">
    <interactant intactId="EBI-2125614">
        <id>Q9BVG8</id>
    </interactant>
    <interactant intactId="EBI-740244">
        <id>Q7Z3B3</id>
        <label>KANSL1</label>
    </interactant>
    <organismsDiffer>false</organismsDiffer>
    <experiments>4</experiments>
</comment>
<comment type="interaction">
    <interactant intactId="EBI-2125614">
        <id>Q9BVG8</id>
    </interactant>
    <interactant intactId="EBI-739566">
        <id>P19012</id>
        <label>KRT15</label>
    </interactant>
    <organismsDiffer>false</organismsDiffer>
    <experiments>3</experiments>
</comment>
<comment type="interaction">
    <interactant intactId="EBI-2125614">
        <id>Q9BVG8</id>
    </interactant>
    <interactant intactId="EBI-742756">
        <id>P08727</id>
        <label>KRT19</label>
    </interactant>
    <organismsDiffer>false</organismsDiffer>
    <experiments>3</experiments>
</comment>
<comment type="interaction">
    <interactant intactId="EBI-2125614">
        <id>Q9BVG8</id>
    </interactant>
    <interactant intactId="EBI-948001">
        <id>Q15323</id>
        <label>KRT31</label>
    </interactant>
    <organismsDiffer>false</organismsDiffer>
    <experiments>3</experiments>
</comment>
<comment type="interaction">
    <interactant intactId="EBI-2125614">
        <id>Q9BVG8</id>
    </interactant>
    <interactant intactId="EBI-10171697">
        <id>Q6A162</id>
        <label>KRT40</label>
    </interactant>
    <organismsDiffer>false</organismsDiffer>
    <experiments>3</experiments>
</comment>
<comment type="interaction">
    <interactant intactId="EBI-2125614">
        <id>Q9BVG8</id>
    </interactant>
    <interactant intactId="EBI-702187">
        <id>P13647</id>
        <label>KRT5</label>
    </interactant>
    <organismsDiffer>false</organismsDiffer>
    <experiments>3</experiments>
</comment>
<comment type="interaction">
    <interactant intactId="EBI-2125614">
        <id>Q9BVG8</id>
    </interactant>
    <interactant intactId="EBI-702198">
        <id>P02538</id>
        <label>KRT6A</label>
    </interactant>
    <organismsDiffer>false</organismsDiffer>
    <experiments>5</experiments>
</comment>
<comment type="interaction">
    <interactant intactId="EBI-2125614">
        <id>Q9BVG8</id>
    </interactant>
    <interactant intactId="EBI-740907">
        <id>P04259</id>
        <label>KRT6B</label>
    </interactant>
    <organismsDiffer>false</organismsDiffer>
    <experiments>3</experiments>
</comment>
<comment type="interaction">
    <interactant intactId="EBI-2125614">
        <id>Q9BVG8</id>
    </interactant>
    <interactant intactId="EBI-2564105">
        <id>P48668</id>
        <label>KRT6C</label>
    </interactant>
    <organismsDiffer>false</organismsDiffer>
    <experiments>3</experiments>
</comment>
<comment type="interaction">
    <interactant intactId="EBI-2125614">
        <id>Q9BVG8</id>
    </interactant>
    <interactant intactId="EBI-726510">
        <id>Q96BZ8</id>
        <label>LENG1</label>
    </interactant>
    <organismsDiffer>false</organismsDiffer>
    <experiments>3</experiments>
</comment>
<comment type="interaction">
    <interactant intactId="EBI-2125614">
        <id>Q9BVG8</id>
    </interactant>
    <interactant intactId="EBI-748884">
        <id>Q96GY3</id>
        <label>LIN37</label>
    </interactant>
    <organismsDiffer>false</organismsDiffer>
    <experiments>3</experiments>
</comment>
<comment type="interaction">
    <interactant intactId="EBI-2125614">
        <id>Q9BVG8</id>
    </interactant>
    <interactant intactId="EBI-741037">
        <id>Q9BRK4</id>
        <label>LZTS2</label>
    </interactant>
    <organismsDiffer>false</organismsDiffer>
    <experiments>3</experiments>
</comment>
<comment type="interaction">
    <interactant intactId="EBI-2125614">
        <id>Q9BVG8</id>
    </interactant>
    <interactant intactId="EBI-355924">
        <id>P33993</id>
        <label>MCM7</label>
    </interactant>
    <organismsDiffer>false</organismsDiffer>
    <experiments>3</experiments>
</comment>
<comment type="interaction">
    <interactant intactId="EBI-2125614">
        <id>Q9BVG8</id>
    </interactant>
    <interactant intactId="EBI-394607">
        <id>Q9NPJ6</id>
        <label>MED4</label>
    </interactant>
    <organismsDiffer>false</organismsDiffer>
    <experiments>3</experiments>
</comment>
<comment type="interaction">
    <interactant intactId="EBI-2125614">
        <id>Q9BVG8</id>
    </interactant>
    <interactant intactId="EBI-1048159">
        <id>P55081</id>
        <label>MFAP1</label>
    </interactant>
    <organismsDiffer>false</organismsDiffer>
    <experiments>3</experiments>
</comment>
<comment type="interaction">
    <interactant intactId="EBI-2125614">
        <id>Q9BVG8</id>
    </interactant>
    <interactant intactId="EBI-10172526">
        <id>Q9UJV3-2</id>
        <label>MID2</label>
    </interactant>
    <organismsDiffer>false</organismsDiffer>
    <experiments>3</experiments>
</comment>
<comment type="interaction">
    <interactant intactId="EBI-2125614">
        <id>Q9BVG8</id>
    </interactant>
    <interactant intactId="EBI-1757866">
        <id>P00540</id>
        <label>MOS</label>
    </interactant>
    <organismsDiffer>false</organismsDiffer>
    <experiments>3</experiments>
</comment>
<comment type="interaction">
    <interactant intactId="EBI-2125614">
        <id>Q9BVG8</id>
    </interactant>
    <interactant intactId="EBI-928842">
        <id>Q9GZM8</id>
        <label>NDEL1</label>
    </interactant>
    <organismsDiffer>false</organismsDiffer>
    <experiments>3</experiments>
</comment>
<comment type="interaction">
    <interactant intactId="EBI-2125614">
        <id>Q9BVG8</id>
    </interactant>
    <interactant intactId="EBI-10172876">
        <id>Q7Z6G3-2</id>
        <label>NECAB2</label>
    </interactant>
    <organismsDiffer>false</organismsDiffer>
    <experiments>3</experiments>
</comment>
<comment type="interaction">
    <interactant intactId="EBI-2125614">
        <id>Q9BVG8</id>
    </interactant>
    <interactant intactId="EBI-10178578">
        <id>I6L9F6</id>
        <label>NEFL</label>
    </interactant>
    <organismsDiffer>false</organismsDiffer>
    <experiments>3</experiments>
</comment>
<comment type="interaction">
    <interactant intactId="EBI-2125614">
        <id>Q9BVG8</id>
    </interactant>
    <interactant intactId="EBI-347978">
        <id>P37198</id>
        <label>NUP62</label>
    </interactant>
    <organismsDiffer>false</organismsDiffer>
    <experiments>3</experiments>
</comment>
<comment type="interaction">
    <interactant intactId="EBI-2125614">
        <id>Q9BVG8</id>
    </interactant>
    <interactant intactId="EBI-713786">
        <id>Q8IXK0</id>
        <label>PHC2</label>
    </interactant>
    <organismsDiffer>false</organismsDiffer>
    <experiments>3</experiments>
</comment>
<comment type="interaction">
    <interactant intactId="EBI-2125614">
        <id>Q9BVG8</id>
    </interactant>
    <interactant intactId="EBI-1383852">
        <id>P54646</id>
        <label>PRKAA2</label>
    </interactant>
    <organismsDiffer>false</organismsDiffer>
    <experiments>4</experiments>
</comment>
<comment type="interaction">
    <interactant intactId="EBI-2125614">
        <id>Q9BVG8</id>
    </interactant>
    <interactant intactId="EBI-372273">
        <id>P20618</id>
        <label>PSMB1</label>
    </interactant>
    <organismsDiffer>false</organismsDiffer>
    <experiments>4</experiments>
</comment>
<comment type="interaction">
    <interactant intactId="EBI-2125614">
        <id>Q9BVG8</id>
    </interactant>
    <interactant intactId="EBI-1055693">
        <id>O75771</id>
        <label>RAD51D</label>
    </interactant>
    <organismsDiffer>false</organismsDiffer>
    <experiments>4</experiments>
</comment>
<comment type="interaction">
    <interactant intactId="EBI-2125614">
        <id>Q9BVG8</id>
    </interactant>
    <interactant intactId="EBI-748350">
        <id>Q9UHP6</id>
        <label>RSPH14</label>
    </interactant>
    <organismsDiffer>false</organismsDiffer>
    <experiments>3</experiments>
</comment>
<comment type="interaction">
    <interactant intactId="EBI-2125614">
        <id>Q9BVG8</id>
    </interactant>
    <interactant intactId="EBI-7543896">
        <id>O95171</id>
        <label>SCEL</label>
    </interactant>
    <organismsDiffer>false</organismsDiffer>
    <experiments>3</experiments>
</comment>
<comment type="interaction">
    <interactant intactId="EBI-2125614">
        <id>Q9BVG8</id>
    </interactant>
    <interactant intactId="EBI-747107">
        <id>Q8IUQ4</id>
        <label>SIAH1</label>
    </interactant>
    <organismsDiffer>false</organismsDiffer>
    <experiments>3</experiments>
</comment>
<comment type="interaction">
    <interactant intactId="EBI-2125614">
        <id>Q9BVG8</id>
    </interactant>
    <interactant intactId="EBI-455078">
        <id>Q969G3</id>
        <label>SMARCE1</label>
    </interactant>
    <organismsDiffer>false</organismsDiffer>
    <experiments>4</experiments>
</comment>
<comment type="interaction">
    <interactant intactId="EBI-2125614">
        <id>Q9BVG8</id>
    </interactant>
    <interactant intactId="EBI-3505701">
        <id>P35711</id>
        <label>SOX5</label>
    </interactant>
    <organismsDiffer>false</organismsDiffer>
    <experiments>3</experiments>
</comment>
<comment type="interaction">
    <interactant intactId="EBI-2125614">
        <id>Q9BVG8</id>
    </interactant>
    <interactant intactId="EBI-6872807">
        <id>Q8N0S2</id>
        <label>SYCE1</label>
    </interactant>
    <organismsDiffer>false</organismsDiffer>
    <experiments>3</experiments>
</comment>
<comment type="interaction">
    <interactant intactId="EBI-2125614">
        <id>Q9BVG8</id>
    </interactant>
    <interactant intactId="EBI-954696">
        <id>Q8N8B7</id>
        <label>TCEANC</label>
    </interactant>
    <organismsDiffer>false</organismsDiffer>
    <experiments>3</experiments>
</comment>
<comment type="interaction">
    <interactant intactId="EBI-2125614">
        <id>Q9BVG8</id>
    </interactant>
    <interactant intactId="EBI-717810">
        <id>Q08117</id>
        <label>TLE5</label>
    </interactant>
    <organismsDiffer>false</organismsDiffer>
    <experiments>3</experiments>
</comment>
<comment type="interaction">
    <interactant intactId="EBI-2125614">
        <id>Q9BVG8</id>
    </interactant>
    <interactant intactId="EBI-357849">
        <id>Q15025</id>
        <label>TNIP1</label>
    </interactant>
    <organismsDiffer>false</organismsDiffer>
    <experiments>3</experiments>
</comment>
<comment type="interaction">
    <interactant intactId="EBI-2125614">
        <id>Q9BVG8</id>
    </interactant>
    <interactant intactId="EBI-10184033">
        <id>Q5VU62</id>
        <label>TPM3</label>
    </interactant>
    <organismsDiffer>false</organismsDiffer>
    <experiments>3</experiments>
</comment>
<comment type="interaction">
    <interactant intactId="EBI-2125614">
        <id>Q9BVG8</id>
    </interactant>
    <interactant intactId="EBI-355744">
        <id>Q12933</id>
        <label>TRAF2</label>
    </interactant>
    <organismsDiffer>false</organismsDiffer>
    <experiments>3</experiments>
</comment>
<comment type="interaction">
    <interactant intactId="EBI-2125614">
        <id>Q9BVG8</id>
    </interactant>
    <interactant intactId="EBI-740098">
        <id>P36406</id>
        <label>TRIM23</label>
    </interactant>
    <organismsDiffer>false</organismsDiffer>
    <experiments>3</experiments>
</comment>
<comment type="interaction">
    <interactant intactId="EBI-2125614">
        <id>Q9BVG8</id>
    </interactant>
    <interactant intactId="EBI-719493">
        <id>P14373</id>
        <label>TRIM27</label>
    </interactant>
    <organismsDiffer>false</organismsDiffer>
    <experiments>3</experiments>
</comment>
<comment type="interaction">
    <interactant intactId="EBI-2125614">
        <id>Q9BVG8</id>
    </interactant>
    <interactant intactId="EBI-725997">
        <id>Q8WV44</id>
        <label>TRIM41</label>
    </interactant>
    <organismsDiffer>false</organismsDiffer>
    <experiments>3</experiments>
</comment>
<comment type="interaction">
    <interactant intactId="EBI-2125614">
        <id>Q9BVG8</id>
    </interactant>
    <interactant intactId="EBI-2130429">
        <id>Q9BYV2</id>
        <label>TRIM54</label>
    </interactant>
    <organismsDiffer>false</organismsDiffer>
    <experiments>3</experiments>
</comment>
<comment type="interaction">
    <interactant intactId="EBI-2125614">
        <id>Q9BVG8</id>
    </interactant>
    <interactant intactId="EBI-346882">
        <id>Q99816</id>
        <label>TSG101</label>
    </interactant>
    <organismsDiffer>false</organismsDiffer>
    <experiments>3</experiments>
</comment>
<comment type="interaction">
    <interactant intactId="EBI-2125614">
        <id>Q9BVG8</id>
    </interactant>
    <interactant intactId="EBI-746981">
        <id>Q969E8</id>
        <label>TSR2</label>
    </interactant>
    <organismsDiffer>false</organismsDiffer>
    <experiments>3</experiments>
</comment>
<comment type="interaction">
    <interactant intactId="EBI-2125614">
        <id>Q9BVG8</id>
    </interactant>
    <interactant intactId="EBI-743272">
        <id>O75604</id>
        <label>USP2</label>
    </interactant>
    <organismsDiffer>false</organismsDiffer>
    <experiments>3</experiments>
</comment>
<comment type="interaction">
    <interactant intactId="EBI-2125614">
        <id>Q9BVG8</id>
    </interactant>
    <interactant intactId="EBI-742740">
        <id>Q96BR9</id>
        <label>ZBTB8A</label>
    </interactant>
    <organismsDiffer>false</organismsDiffer>
    <experiments>3</experiments>
</comment>
<comment type="interaction">
    <interactant intactId="EBI-2125614">
        <id>Q9BVG8</id>
    </interactant>
    <interactant intactId="EBI-3439227">
        <id>Q8N5A5</id>
        <label>ZGPAT</label>
    </interactant>
    <organismsDiffer>false</organismsDiffer>
    <experiments>4</experiments>
</comment>
<comment type="interaction">
    <interactant intactId="EBI-2125614">
        <id>Q9BVG8</id>
    </interactant>
    <interactant intactId="EBI-10183064">
        <id>Q8N5A5-2</id>
        <label>ZGPAT</label>
    </interactant>
    <organismsDiffer>false</organismsDiffer>
    <experiments>3</experiments>
</comment>
<comment type="interaction">
    <interactant intactId="EBI-2125614">
        <id>Q9BVG8</id>
    </interactant>
    <interactant intactId="EBI-10322527">
        <id>Q9UJW8</id>
        <label>ZNF180</label>
    </interactant>
    <organismsDiffer>false</organismsDiffer>
    <experiments>3</experiments>
</comment>
<comment type="interaction">
    <interactant intactId="EBI-2125614">
        <id>Q9BVG8</id>
    </interactant>
    <interactant intactId="EBI-717634">
        <id>P17024</id>
        <label>ZNF20</label>
    </interactant>
    <organismsDiffer>false</organismsDiffer>
    <experiments>3</experiments>
</comment>
<comment type="interaction">
    <interactant intactId="EBI-2125614">
        <id>Q9BVG8</id>
    </interactant>
    <interactant intactId="EBI-10172590">
        <id>Q7Z3I7</id>
        <label>ZNF572</label>
    </interactant>
    <organismsDiffer>false</organismsDiffer>
    <experiments>6</experiments>
</comment>
<comment type="interaction">
    <interactant intactId="EBI-2125614">
        <id>Q9BVG8</id>
    </interactant>
    <interactant intactId="EBI-625509">
        <id>Q8N720</id>
        <label>ZNF655</label>
    </interactant>
    <organismsDiffer>false</organismsDiffer>
    <experiments>3</experiments>
</comment>
<comment type="interaction">
    <interactant intactId="EBI-14069005">
        <id>Q9BVG8-5</id>
    </interactant>
    <interactant intactId="EBI-11096309">
        <id>Q9NYB9-2</id>
        <label>ABI2</label>
    </interactant>
    <organismsDiffer>false</organismsDiffer>
    <experiments>3</experiments>
</comment>
<comment type="interaction">
    <interactant intactId="EBI-14069005">
        <id>Q9BVG8-5</id>
    </interactant>
    <interactant intactId="EBI-742038">
        <id>Q9P2A4</id>
        <label>ABI3</label>
    </interactant>
    <organismsDiffer>false</organismsDiffer>
    <experiments>3</experiments>
</comment>
<comment type="interaction">
    <interactant intactId="EBI-14069005">
        <id>Q9BVG8-5</id>
    </interactant>
    <interactant intactId="EBI-8643161">
        <id>Q9NX04</id>
        <label>AIRIM</label>
    </interactant>
    <organismsDiffer>false</organismsDiffer>
    <experiments>3</experiments>
</comment>
<comment type="interaction">
    <interactant intactId="EBI-14069005">
        <id>Q9BVG8-5</id>
    </interactant>
    <interactant intactId="EBI-5661893">
        <id>Q86SG2</id>
        <label>ANKRD23</label>
    </interactant>
    <organismsDiffer>false</organismsDiffer>
    <experiments>3</experiments>
</comment>
<comment type="interaction">
    <interactant intactId="EBI-14069005">
        <id>Q9BVG8-5</id>
    </interactant>
    <interactant intactId="EBI-741261">
        <id>Q8NEU8</id>
        <label>APPL2</label>
    </interactant>
    <organismsDiffer>false</organismsDiffer>
    <experiments>3</experiments>
</comment>
<comment type="interaction">
    <interactant intactId="EBI-14069005">
        <id>Q9BVG8-5</id>
    </interactant>
    <interactant intactId="EBI-1170906">
        <id>P15336</id>
        <label>ATF2</label>
    </interactant>
    <organismsDiffer>false</organismsDiffer>
    <experiments>3</experiments>
</comment>
<comment type="interaction">
    <interactant intactId="EBI-14069005">
        <id>Q9BVG8-5</id>
    </interactant>
    <interactant intactId="EBI-4400025">
        <id>Q9Y2T1</id>
        <label>AXIN2</label>
    </interactant>
    <organismsDiffer>false</organismsDiffer>
    <experiments>3</experiments>
</comment>
<comment type="interaction">
    <interactant intactId="EBI-14069005">
        <id>Q9BVG8-5</id>
    </interactant>
    <interactant intactId="EBI-473181">
        <id>Q99728</id>
        <label>BARD1</label>
    </interactant>
    <organismsDiffer>false</organismsDiffer>
    <experiments>3</experiments>
</comment>
<comment type="interaction">
    <interactant intactId="EBI-14069005">
        <id>Q9BVG8-5</id>
    </interactant>
    <interactant intactId="EBI-742722">
        <id>Q9BUH8</id>
        <label>BEGAIN</label>
    </interactant>
    <organismsDiffer>false</organismsDiffer>
    <experiments>3</experiments>
</comment>
<comment type="interaction">
    <interactant intactId="EBI-14069005">
        <id>Q9BVG8-5</id>
    </interactant>
    <interactant intactId="EBI-12123320">
        <id>Q12934-2</id>
        <label>BFSP1</label>
    </interactant>
    <organismsDiffer>false</organismsDiffer>
    <experiments>3</experiments>
</comment>
<comment type="interaction">
    <interactant intactId="EBI-14069005">
        <id>Q9BVG8-5</id>
    </interactant>
    <interactant intactId="EBI-358049">
        <id>Q13895</id>
        <label>BYSL</label>
    </interactant>
    <organismsDiffer>false</organismsDiffer>
    <experiments>5</experiments>
</comment>
<comment type="interaction">
    <interactant intactId="EBI-14069005">
        <id>Q9BVG8-5</id>
    </interactant>
    <interactant intactId="EBI-739879">
        <id>Q53TS8</id>
        <label>C2CD6</label>
    </interactant>
    <organismsDiffer>false</organismsDiffer>
    <experiments>3</experiments>
</comment>
<comment type="interaction">
    <interactant intactId="EBI-14069005">
        <id>Q9BVG8-5</id>
    </interactant>
    <interactant intactId="EBI-11530605">
        <id>Q9H257-2</id>
        <label>CARD9</label>
    </interactant>
    <organismsDiffer>false</organismsDiffer>
    <experiments>3</experiments>
</comment>
<comment type="interaction">
    <interactant intactId="EBI-14069005">
        <id>Q9BVG8-5</id>
    </interactant>
    <interactant intactId="EBI-11954144">
        <id>O43439-4</id>
        <label>CBFA2T2</label>
    </interactant>
    <organismsDiffer>false</organismsDiffer>
    <experiments>3</experiments>
</comment>
<comment type="interaction">
    <interactant intactId="EBI-14069005">
        <id>Q9BVG8-5</id>
    </interactant>
    <interactant intactId="EBI-712912">
        <id>Q9HC52</id>
        <label>CBX8</label>
    </interactant>
    <organismsDiffer>false</organismsDiffer>
    <experiments>3</experiments>
</comment>
<comment type="interaction">
    <interactant intactId="EBI-14069005">
        <id>Q9BVG8-5</id>
    </interactant>
    <interactant intactId="EBI-11524851">
        <id>Q8NA61-2</id>
        <label>CBY2</label>
    </interactant>
    <organismsDiffer>false</organismsDiffer>
    <experiments>3</experiments>
</comment>
<comment type="interaction">
    <interactant intactId="EBI-14069005">
        <id>Q9BVG8-5</id>
    </interactant>
    <interactant intactId="EBI-10749669">
        <id>Q8IYE0</id>
        <label>CCDC146</label>
    </interactant>
    <organismsDiffer>false</organismsDiffer>
    <experiments>3</experiments>
</comment>
<comment type="interaction">
    <interactant intactId="EBI-14069005">
        <id>Q9BVG8-5</id>
    </interactant>
    <interactant intactId="EBI-11748295">
        <id>E9PSE9</id>
        <label>CCDC198</label>
    </interactant>
    <organismsDiffer>false</organismsDiffer>
    <experiments>3</experiments>
</comment>
<comment type="interaction">
    <interactant intactId="EBI-14069005">
        <id>Q9BVG8-5</id>
    </interactant>
    <interactant intactId="EBI-21238948">
        <id>Q8TD31-1</id>
        <label>CCHCR1</label>
    </interactant>
    <organismsDiffer>false</organismsDiffer>
    <experiments>4</experiments>
</comment>
<comment type="interaction">
    <interactant intactId="EBI-14069005">
        <id>Q9BVG8-5</id>
    </interactant>
    <interactant intactId="EBI-10175300">
        <id>Q8TD31-3</id>
        <label>CCHCR1</label>
    </interactant>
    <organismsDiffer>false</organismsDiffer>
    <experiments>3</experiments>
</comment>
<comment type="interaction">
    <interactant intactId="EBI-14069005">
        <id>Q9BVG8-5</id>
    </interactant>
    <interactant intactId="EBI-375013">
        <id>P30281</id>
        <label>CCND3</label>
    </interactant>
    <organismsDiffer>false</organismsDiffer>
    <experiments>3</experiments>
</comment>
<comment type="interaction">
    <interactant intactId="EBI-14069005">
        <id>Q9BVG8-5</id>
    </interactant>
    <interactant intactId="EBI-295634">
        <id>Q16543</id>
        <label>CDC37</label>
    </interactant>
    <organismsDiffer>false</organismsDiffer>
    <experiments>3</experiments>
</comment>
<comment type="interaction">
    <interactant intactId="EBI-14069005">
        <id>Q9BVG8-5</id>
    </interactant>
    <interactant intactId="EBI-375077">
        <id>P38936</id>
        <label>CDKN1A</label>
    </interactant>
    <organismsDiffer>false</organismsDiffer>
    <experiments>3</experiments>
</comment>
<comment type="interaction">
    <interactant intactId="EBI-14069005">
        <id>Q9BVG8-5</id>
    </interactant>
    <interactant intactId="EBI-1181367">
        <id>Q01850</id>
        <label>CDR2</label>
    </interactant>
    <organismsDiffer>false</organismsDiffer>
    <experiments>3</experiments>
</comment>
<comment type="interaction">
    <interactant intactId="EBI-14069005">
        <id>Q9BVG8-5</id>
    </interactant>
    <interactant intactId="EBI-747776">
        <id>Q53EZ4</id>
        <label>CEP55</label>
    </interactant>
    <organismsDiffer>false</organismsDiffer>
    <experiments>3</experiments>
</comment>
<comment type="interaction">
    <interactant intactId="EBI-14069005">
        <id>Q9BVG8-5</id>
    </interactant>
    <interactant intactId="EBI-5655540">
        <id>Q8N3C7</id>
        <label>CLIP4</label>
    </interactant>
    <organismsDiffer>false</organismsDiffer>
    <experiments>3</experiments>
</comment>
<comment type="interaction">
    <interactant intactId="EBI-14069005">
        <id>Q9BVG8-5</id>
    </interactant>
    <interactant intactId="EBI-9091495">
        <id>Q96JB2-2</id>
        <label>COG3</label>
    </interactant>
    <organismsDiffer>false</organismsDiffer>
    <experiments>3</experiments>
</comment>
<comment type="interaction">
    <interactant intactId="EBI-14069005">
        <id>Q9BVG8-5</id>
    </interactant>
    <interactant intactId="EBI-16430119">
        <id>A0A0S2Z604</id>
        <label>COG7</label>
    </interactant>
    <organismsDiffer>false</organismsDiffer>
    <experiments>3</experiments>
</comment>
<comment type="interaction">
    <interactant intactId="EBI-14069005">
        <id>Q9BVG8-5</id>
    </interactant>
    <interactant intactId="EBI-389534">
        <id>P83436</id>
        <label>COG7</label>
    </interactant>
    <organismsDiffer>false</organismsDiffer>
    <experiments>6</experiments>
</comment>
<comment type="interaction">
    <interactant intactId="EBI-14069005">
        <id>Q9BVG8-5</id>
    </interactant>
    <interactant intactId="EBI-10192698">
        <id>Q02930-3</id>
        <label>CREB5</label>
    </interactant>
    <organismsDiffer>false</organismsDiffer>
    <experiments>3</experiments>
</comment>
<comment type="interaction">
    <interactant intactId="EBI-14069005">
        <id>Q9BVG8-5</id>
    </interactant>
    <interactant intactId="EBI-5453285">
        <id>Q2TBE0</id>
        <label>CWF19L2</label>
    </interactant>
    <organismsDiffer>false</organismsDiffer>
    <experiments>3</experiments>
</comment>
<comment type="interaction">
    <interactant intactId="EBI-14069005">
        <id>Q9BVG8-5</id>
    </interactant>
    <interactant intactId="EBI-715074">
        <id>Q13561</id>
        <label>DCTN2</label>
    </interactant>
    <organismsDiffer>false</organismsDiffer>
    <experiments>3</experiments>
</comment>
<comment type="interaction">
    <interactant intactId="EBI-14069005">
        <id>Q9BVG8-5</id>
    </interactant>
    <interactant intactId="EBI-748597">
        <id>Q05D60</id>
        <label>DEUP1</label>
    </interactant>
    <organismsDiffer>false</organismsDiffer>
    <experiments>5</experiments>
</comment>
<comment type="interaction">
    <interactant intactId="EBI-14069005">
        <id>Q9BVG8-5</id>
    </interactant>
    <interactant intactId="EBI-11988027">
        <id>Q9NRI5-2</id>
        <label>DISC1</label>
    </interactant>
    <organismsDiffer>false</organismsDiffer>
    <experiments>3</experiments>
</comment>
<comment type="interaction">
    <interactant intactId="EBI-14069005">
        <id>Q9BVG8-5</id>
    </interactant>
    <interactant intactId="EBI-353818">
        <id>O15371</id>
        <label>EIF3D</label>
    </interactant>
    <organismsDiffer>false</organismsDiffer>
    <experiments>3</experiments>
</comment>
<comment type="interaction">
    <interactant intactId="EBI-14069005">
        <id>Q9BVG8-5</id>
    </interactant>
    <interactant intactId="EBI-744099">
        <id>Q9H0I2</id>
        <label>ENKD1</label>
    </interactant>
    <organismsDiffer>false</organismsDiffer>
    <experiments>3</experiments>
</comment>
<comment type="interaction">
    <interactant intactId="EBI-14069005">
        <id>Q9BVG8-5</id>
    </interactant>
    <interactant intactId="EBI-949824">
        <id>O00471</id>
        <label>EXOC5</label>
    </interactant>
    <organismsDiffer>false</organismsDiffer>
    <experiments>3</experiments>
</comment>
<comment type="interaction">
    <interactant intactId="EBI-14069005">
        <id>Q9BVG8-5</id>
    </interactant>
    <interactant intactId="EBI-6251402">
        <id>Q9UPT5-1</id>
        <label>EXOC7</label>
    </interactant>
    <organismsDiffer>false</organismsDiffer>
    <experiments>3</experiments>
</comment>
<comment type="interaction">
    <interactant intactId="EBI-14069005">
        <id>Q9BVG8-5</id>
    </interactant>
    <interactant intactId="EBI-742102">
        <id>Q8IYI6</id>
        <label>EXOC8</label>
    </interactant>
    <organismsDiffer>false</organismsDiffer>
    <experiments>3</experiments>
</comment>
<comment type="interaction">
    <interactant intactId="EBI-14069005">
        <id>Q9BVG8-5</id>
    </interactant>
    <interactant intactId="EBI-719941">
        <id>Q3B820</id>
        <label>FAM161A</label>
    </interactant>
    <organismsDiffer>false</organismsDiffer>
    <experiments>3</experiments>
</comment>
<comment type="interaction">
    <interactant intactId="EBI-14069005">
        <id>Q9BVG8-5</id>
    </interactant>
    <interactant intactId="EBI-6658203">
        <id>Q86YD7</id>
        <label>FAM90A1</label>
    </interactant>
    <organismsDiffer>false</organismsDiffer>
    <experiments>3</experiments>
</comment>
<comment type="interaction">
    <interactant intactId="EBI-14069005">
        <id>Q9BVG8-5</id>
    </interactant>
    <interactant intactId="EBI-2339898">
        <id>Q9NW38</id>
        <label>FANCL</label>
    </interactant>
    <organismsDiffer>false</organismsDiffer>
    <experiments>3</experiments>
</comment>
<comment type="interaction">
    <interactant intactId="EBI-14069005">
        <id>Q9BVG8-5</id>
    </interactant>
    <interactant intactId="EBI-2515349">
        <id>Q9BSK4</id>
        <label>FEM1A</label>
    </interactant>
    <organismsDiffer>false</organismsDiffer>
    <experiments>3</experiments>
</comment>
<comment type="interaction">
    <interactant intactId="EBI-14069005">
        <id>Q9BVG8-5</id>
    </interactant>
    <interactant intactId="EBI-348399">
        <id>P22607</id>
        <label>FGFR3</label>
    </interactant>
    <organismsDiffer>false</organismsDiffer>
    <experiments>3</experiments>
</comment>
<comment type="interaction">
    <interactant intactId="EBI-14069005">
        <id>Q9BVG8-5</id>
    </interactant>
    <interactant intactId="EBI-719415">
        <id>Q4VC44</id>
        <label>FLYWCH1</label>
    </interactant>
    <organismsDiffer>false</organismsDiffer>
    <experiments>3</experiments>
</comment>
<comment type="interaction">
    <interactant intactId="EBI-14069005">
        <id>Q9BVG8-5</id>
    </interactant>
    <interactant intactId="EBI-744510">
        <id>P15407</id>
        <label>FOSL1</label>
    </interactant>
    <organismsDiffer>false</organismsDiffer>
    <experiments>3</experiments>
</comment>
<comment type="interaction">
    <interactant intactId="EBI-14069005">
        <id>Q9BVG8-5</id>
    </interactant>
    <interactant intactId="EBI-372506">
        <id>Q8TAE8</id>
        <label>GADD45GIP1</label>
    </interactant>
    <organismsDiffer>false</organismsDiffer>
    <experiments>3</experiments>
</comment>
<comment type="interaction">
    <interactant intactId="EBI-14069005">
        <id>Q9BVG8-5</id>
    </interactant>
    <interactant intactId="EBI-744104">
        <id>P55040</id>
        <label>GEM</label>
    </interactant>
    <organismsDiffer>false</organismsDiffer>
    <experiments>3</experiments>
</comment>
<comment type="interaction">
    <interactant intactId="EBI-14069005">
        <id>Q9BVG8-5</id>
    </interactant>
    <interactant intactId="EBI-744302">
        <id>P14136</id>
        <label>GFAP</label>
    </interactant>
    <organismsDiffer>false</organismsDiffer>
    <experiments>3</experiments>
</comment>
<comment type="interaction">
    <interactant intactId="EBI-14069005">
        <id>Q9BVG8-5</id>
    </interactant>
    <interactant intactId="EBI-947774">
        <id>O75420</id>
        <label>GIGYF1</label>
    </interactant>
    <organismsDiffer>false</organismsDiffer>
    <experiments>3</experiments>
</comment>
<comment type="interaction">
    <interactant intactId="EBI-14069005">
        <id>Q9BVG8-5</id>
    </interactant>
    <interactant intactId="EBI-2548508">
        <id>Q96IK5</id>
        <label>GMCL1</label>
    </interactant>
    <organismsDiffer>false</organismsDiffer>
    <experiments>3</experiments>
</comment>
<comment type="interaction">
    <interactant intactId="EBI-14069005">
        <id>Q9BVG8-5</id>
    </interactant>
    <interactant intactId="EBI-6164177">
        <id>Q92805</id>
        <label>GOLGA1</label>
    </interactant>
    <organismsDiffer>false</organismsDiffer>
    <experiments>3</experiments>
</comment>
<comment type="interaction">
    <interactant intactId="EBI-14069005">
        <id>Q9BVG8-5</id>
    </interactant>
    <interactant intactId="EBI-618309">
        <id>Q08379</id>
        <label>GOLGA2</label>
    </interactant>
    <organismsDiffer>false</organismsDiffer>
    <experiments>3</experiments>
</comment>
<comment type="interaction">
    <interactant intactId="EBI-14069005">
        <id>Q9BVG8-5</id>
    </interactant>
    <interactant intactId="EBI-739467">
        <id>Q9H8Y8</id>
        <label>GORASP2</label>
    </interactant>
    <organismsDiffer>false</organismsDiffer>
    <experiments>3</experiments>
</comment>
<comment type="interaction">
    <interactant intactId="EBI-14069005">
        <id>Q9BVG8-5</id>
    </interactant>
    <interactant intactId="EBI-740641">
        <id>Q9NP66</id>
        <label>HMG20A</label>
    </interactant>
    <organismsDiffer>false</organismsDiffer>
    <experiments>3</experiments>
</comment>
<comment type="interaction">
    <interactant intactId="EBI-14069005">
        <id>Q9BVG8-5</id>
    </interactant>
    <interactant intactId="EBI-350145">
        <id>P01112</id>
        <label>HRAS</label>
    </interactant>
    <organismsDiffer>false</organismsDiffer>
    <experiments>3</experiments>
</comment>
<comment type="interaction">
    <interactant intactId="EBI-14069005">
        <id>Q9BVG8-5</id>
    </interactant>
    <interactant intactId="EBI-748664">
        <id>O75506</id>
        <label>HSBP1</label>
    </interactant>
    <organismsDiffer>false</organismsDiffer>
    <experiments>3</experiments>
</comment>
<comment type="interaction">
    <interactant intactId="EBI-14069005">
        <id>Q9BVG8-5</id>
    </interactant>
    <interactant intactId="EBI-7116203">
        <id>O75031</id>
        <label>HSF2BP</label>
    </interactant>
    <organismsDiffer>false</organismsDiffer>
    <experiments>3</experiments>
</comment>
<comment type="interaction">
    <interactant intactId="EBI-14069005">
        <id>Q9BVG8-5</id>
    </interactant>
    <interactant intactId="EBI-11955401">
        <id>Q86VF2-5</id>
        <label>IGFN1</label>
    </interactant>
    <organismsDiffer>false</organismsDiffer>
    <experiments>3</experiments>
</comment>
<comment type="interaction">
    <interactant intactId="EBI-14069005">
        <id>Q9BVG8-5</id>
    </interactant>
    <interactant intactId="EBI-8638439">
        <id>Q8IYA8</id>
        <label>IHO1</label>
    </interactant>
    <organismsDiffer>false</organismsDiffer>
    <experiments>3</experiments>
</comment>
<comment type="interaction">
    <interactant intactId="EBI-14069005">
        <id>Q9BVG8-5</id>
    </interactant>
    <interactant intactId="EBI-747204">
        <id>Q9UKT9</id>
        <label>IKZF3</label>
    </interactant>
    <organismsDiffer>false</organismsDiffer>
    <experiments>3</experiments>
</comment>
<comment type="interaction">
    <interactant intactId="EBI-14069005">
        <id>Q9BVG8-5</id>
    </interactant>
    <interactant intactId="EBI-17178971">
        <id>Q14005-2</id>
        <label>IL16</label>
    </interactant>
    <organismsDiffer>false</organismsDiffer>
    <experiments>3</experiments>
</comment>
<comment type="interaction">
    <interactant intactId="EBI-14069005">
        <id>Q9BVG8-5</id>
    </interactant>
    <interactant intactId="EBI-10220600">
        <id>Q8NA54</id>
        <label>IQUB</label>
    </interactant>
    <organismsDiffer>false</organismsDiffer>
    <experiments>3</experiments>
</comment>
<comment type="interaction">
    <interactant intactId="EBI-14069005">
        <id>Q9BVG8-5</id>
    </interactant>
    <interactant intactId="EBI-712105">
        <id>Q13352</id>
        <label>ITGB3BP</label>
    </interactant>
    <organismsDiffer>false</organismsDiffer>
    <experiments>3</experiments>
</comment>
<comment type="interaction">
    <interactant intactId="EBI-14069005">
        <id>Q9BVG8-5</id>
    </interactant>
    <interactant intactId="EBI-2556193">
        <id>Q63ZY3</id>
        <label>KANK2</label>
    </interactant>
    <organismsDiffer>false</organismsDiffer>
    <experiments>3</experiments>
</comment>
<comment type="interaction">
    <interactant intactId="EBI-14069005">
        <id>Q9BVG8-5</id>
    </interactant>
    <interactant intactId="EBI-710124">
        <id>O60341</id>
        <label>KDM1A</label>
    </interactant>
    <organismsDiffer>false</organismsDiffer>
    <experiments>3</experiments>
</comment>
<comment type="interaction">
    <interactant intactId="EBI-14069005">
        <id>Q9BVG8-5</id>
    </interactant>
    <interactant intactId="EBI-2805604">
        <id>Q2KHM9</id>
        <label>KIAA0753</label>
    </interactant>
    <organismsDiffer>false</organismsDiffer>
    <experiments>3</experiments>
</comment>
<comment type="interaction">
    <interactant intactId="EBI-14069005">
        <id>Q9BVG8-5</id>
    </interactant>
    <interactant intactId="EBI-14069005">
        <id>Q9BVG8-5</id>
        <label>KIFC3</label>
    </interactant>
    <organismsDiffer>false</organismsDiffer>
    <experiments>3</experiments>
</comment>
<comment type="interaction">
    <interactant intactId="EBI-14069005">
        <id>Q9BVG8-5</id>
    </interactant>
    <interactant intactId="EBI-948266">
        <id>O14901</id>
        <label>KLF11</label>
    </interactant>
    <organismsDiffer>false</organismsDiffer>
    <experiments>3</experiments>
</comment>
<comment type="interaction">
    <interactant intactId="EBI-14069005">
        <id>Q9BVG8-5</id>
    </interactant>
    <interactant intactId="EBI-702178">
        <id>P02533</id>
        <label>KRT14</label>
    </interactant>
    <organismsDiffer>false</organismsDiffer>
    <experiments>3</experiments>
</comment>
<comment type="interaction">
    <interactant intactId="EBI-14069005">
        <id>Q9BVG8-5</id>
    </interactant>
    <interactant intactId="EBI-739566">
        <id>P19012</id>
        <label>KRT15</label>
    </interactant>
    <organismsDiffer>false</organismsDiffer>
    <experiments>3</experiments>
</comment>
<comment type="interaction">
    <interactant intactId="EBI-14069005">
        <id>Q9BVG8-5</id>
    </interactant>
    <interactant intactId="EBI-356410">
        <id>P08779</id>
        <label>KRT16</label>
    </interactant>
    <organismsDiffer>false</organismsDiffer>
    <experiments>3</experiments>
</comment>
<comment type="interaction">
    <interactant intactId="EBI-14069005">
        <id>Q9BVG8-5</id>
    </interactant>
    <interactant intactId="EBI-297888">
        <id>P05783</id>
        <label>KRT18</label>
    </interactant>
    <organismsDiffer>false</organismsDiffer>
    <experiments>3</experiments>
</comment>
<comment type="interaction">
    <interactant intactId="EBI-14069005">
        <id>Q9BVG8-5</id>
    </interactant>
    <interactant intactId="EBI-12084444">
        <id>Q7Z3Y9</id>
        <label>KRT26</label>
    </interactant>
    <organismsDiffer>false</organismsDiffer>
    <experiments>3</experiments>
</comment>
<comment type="interaction">
    <interactant intactId="EBI-14069005">
        <id>Q9BVG8-5</id>
    </interactant>
    <interactant intactId="EBI-2430095">
        <id>P12035</id>
        <label>KRT3</label>
    </interactant>
    <organismsDiffer>false</organismsDiffer>
    <experiments>3</experiments>
</comment>
<comment type="interaction">
    <interactant intactId="EBI-14069005">
        <id>Q9BVG8-5</id>
    </interactant>
    <interactant intactId="EBI-948001">
        <id>Q15323</id>
        <label>KRT31</label>
    </interactant>
    <organismsDiffer>false</organismsDiffer>
    <experiments>3</experiments>
</comment>
<comment type="interaction">
    <interactant intactId="EBI-14069005">
        <id>Q9BVG8-5</id>
    </interactant>
    <interactant intactId="EBI-1044146">
        <id>Q14532</id>
        <label>KRT32</label>
    </interactant>
    <organismsDiffer>false</organismsDiffer>
    <experiments>3</experiments>
</comment>
<comment type="interaction">
    <interactant intactId="EBI-14069005">
        <id>Q9BVG8-5</id>
    </interactant>
    <interactant intactId="EBI-1058674">
        <id>Q92764</id>
        <label>KRT35</label>
    </interactant>
    <organismsDiffer>false</organismsDiffer>
    <experiments>3</experiments>
</comment>
<comment type="interaction">
    <interactant intactId="EBI-14069005">
        <id>Q9BVG8-5</id>
    </interactant>
    <interactant intactId="EBI-1047263">
        <id>O76015</id>
        <label>KRT38</label>
    </interactant>
    <organismsDiffer>false</organismsDiffer>
    <experiments>3</experiments>
</comment>
<comment type="interaction">
    <interactant intactId="EBI-14069005">
        <id>Q9BVG8-5</id>
    </interactant>
    <interactant intactId="EBI-702187">
        <id>P13647</id>
        <label>KRT5</label>
    </interactant>
    <organismsDiffer>false</organismsDiffer>
    <experiments>3</experiments>
</comment>
<comment type="interaction">
    <interactant intactId="EBI-14069005">
        <id>Q9BVG8-5</id>
    </interactant>
    <interactant intactId="EBI-702198">
        <id>P02538</id>
        <label>KRT6A</label>
    </interactant>
    <organismsDiffer>false</organismsDiffer>
    <experiments>3</experiments>
</comment>
<comment type="interaction">
    <interactant intactId="EBI-14069005">
        <id>Q9BVG8-5</id>
    </interactant>
    <interactant intactId="EBI-740907">
        <id>P04259</id>
        <label>KRT6B</label>
    </interactant>
    <organismsDiffer>false</organismsDiffer>
    <experiments>3</experiments>
</comment>
<comment type="interaction">
    <interactant intactId="EBI-14069005">
        <id>Q9BVG8-5</id>
    </interactant>
    <interactant intactId="EBI-2564105">
        <id>P48668</id>
        <label>KRT6C</label>
    </interactant>
    <organismsDiffer>false</organismsDiffer>
    <experiments>3</experiments>
</comment>
<comment type="interaction">
    <interactant intactId="EBI-14069005">
        <id>Q9BVG8-5</id>
    </interactant>
    <interactant intactId="EBI-2949715">
        <id>O95678</id>
        <label>KRT75</label>
    </interactant>
    <organismsDiffer>false</organismsDiffer>
    <experiments>3</experiments>
</comment>
<comment type="interaction">
    <interactant intactId="EBI-14069005">
        <id>Q9BVG8-5</id>
    </interactant>
    <interactant intactId="EBI-2952745">
        <id>Q01546</id>
        <label>KRT76</label>
    </interactant>
    <organismsDiffer>false</organismsDiffer>
    <experiments>3</experiments>
</comment>
<comment type="interaction">
    <interactant intactId="EBI-14069005">
        <id>Q9BVG8-5</id>
    </interactant>
    <interactant intactId="EBI-1048945">
        <id>Q3LI72</id>
        <label>KRTAP19-5</label>
    </interactant>
    <organismsDiffer>false</organismsDiffer>
    <experiments>3</experiments>
</comment>
<comment type="interaction">
    <interactant intactId="EBI-14069005">
        <id>Q9BVG8-5</id>
    </interactant>
    <interactant intactId="EBI-12805508">
        <id>Q3LI70</id>
        <label>KRTAP19-6</label>
    </interactant>
    <organismsDiffer>false</organismsDiffer>
    <experiments>3</experiments>
</comment>
<comment type="interaction">
    <interactant intactId="EBI-14069005">
        <id>Q9BVG8-5</id>
    </interactant>
    <interactant intactId="EBI-20141748">
        <id>P52954</id>
        <label>LBX1</label>
    </interactant>
    <organismsDiffer>false</organismsDiffer>
    <experiments>3</experiments>
</comment>
<comment type="interaction">
    <interactant intactId="EBI-14069005">
        <id>Q9BVG8-5</id>
    </interactant>
    <interactant intactId="EBI-726510">
        <id>Q96BZ8</id>
        <label>LENG1</label>
    </interactant>
    <organismsDiffer>false</organismsDiffer>
    <experiments>3</experiments>
</comment>
<comment type="interaction">
    <interactant intactId="EBI-14069005">
        <id>Q9BVG8-5</id>
    </interactant>
    <interactant intactId="EBI-739832">
        <id>Q8TBB1</id>
        <label>LNX1</label>
    </interactant>
    <organismsDiffer>false</organismsDiffer>
    <experiments>3</experiments>
</comment>
<comment type="interaction">
    <interactant intactId="EBI-14069005">
        <id>Q9BVG8-5</id>
    </interactant>
    <interactant intactId="EBI-1216080">
        <id>Q9Y250</id>
        <label>LZTS1</label>
    </interactant>
    <organismsDiffer>false</organismsDiffer>
    <experiments>3</experiments>
</comment>
<comment type="interaction">
    <interactant intactId="EBI-14069005">
        <id>Q9BVG8-5</id>
    </interactant>
    <interactant intactId="EBI-741037">
        <id>Q9BRK4</id>
        <label>LZTS2</label>
    </interactant>
    <organismsDiffer>false</organismsDiffer>
    <experiments>3</experiments>
</comment>
<comment type="interaction">
    <interactant intactId="EBI-14069005">
        <id>Q9BVG8-5</id>
    </interactant>
    <interactant intactId="EBI-12516603">
        <id>Q8WWY6</id>
        <label>MBD3L1</label>
    </interactant>
    <organismsDiffer>false</organismsDiffer>
    <experiments>3</experiments>
</comment>
<comment type="interaction">
    <interactant intactId="EBI-14069005">
        <id>Q9BVG8-5</id>
    </interactant>
    <interactant intactId="EBI-307531">
        <id>P23508</id>
        <label>MCC</label>
    </interactant>
    <organismsDiffer>false</organismsDiffer>
    <experiments>3</experiments>
</comment>
<comment type="interaction">
    <interactant intactId="EBI-14069005">
        <id>Q9BVG8-5</id>
    </interactant>
    <interactant intactId="EBI-394607">
        <id>Q9NPJ6</id>
        <label>MED4</label>
    </interactant>
    <organismsDiffer>false</organismsDiffer>
    <experiments>3</experiments>
</comment>
<comment type="interaction">
    <interactant intactId="EBI-14069005">
        <id>Q9BVG8-5</id>
    </interactant>
    <interactant intactId="EBI-1048159">
        <id>P55081</id>
        <label>MFAP1</label>
    </interactant>
    <organismsDiffer>false</organismsDiffer>
    <experiments>3</experiments>
</comment>
<comment type="interaction">
    <interactant intactId="EBI-14069005">
        <id>Q9BVG8-5</id>
    </interactant>
    <interactant intactId="EBI-14086479">
        <id>Q8IVT4</id>
        <label>MGC50722</label>
    </interactant>
    <organismsDiffer>false</organismsDiffer>
    <experiments>3</experiments>
</comment>
<comment type="interaction">
    <interactant intactId="EBI-14069005">
        <id>Q9BVG8-5</id>
    </interactant>
    <interactant intactId="EBI-10172526">
        <id>Q9UJV3-2</id>
        <label>MID2</label>
    </interactant>
    <organismsDiffer>false</organismsDiffer>
    <experiments>3</experiments>
</comment>
<comment type="interaction">
    <interactant intactId="EBI-14069005">
        <id>Q9BVG8-5</id>
    </interactant>
    <interactant intactId="EBI-2340269">
        <id>Q13064</id>
        <label>MKRN3</label>
    </interactant>
    <organismsDiffer>false</organismsDiffer>
    <experiments>3</experiments>
</comment>
<comment type="interaction">
    <interactant intactId="EBI-14069005">
        <id>Q9BVG8-5</id>
    </interactant>
    <interactant intactId="EBI-995714">
        <id>Q9Y605</id>
        <label>MRFAP1</label>
    </interactant>
    <organismsDiffer>false</organismsDiffer>
    <experiments>3</experiments>
</comment>
<comment type="interaction">
    <interactant intactId="EBI-14069005">
        <id>Q9BVG8-5</id>
    </interactant>
    <interactant intactId="EBI-11522433">
        <id>Q5JR59-3</id>
        <label>MTUS2</label>
    </interactant>
    <organismsDiffer>false</organismsDiffer>
    <experiments>5</experiments>
</comment>
<comment type="interaction">
    <interactant intactId="EBI-14069005">
        <id>Q9BVG8-5</id>
    </interactant>
    <interactant intactId="EBI-7950783">
        <id>Q96JP2</id>
        <label>MYO15B</label>
    </interactant>
    <organismsDiffer>false</organismsDiffer>
    <experiments>3</experiments>
</comment>
<comment type="interaction">
    <interactant intactId="EBI-14069005">
        <id>Q9BVG8-5</id>
    </interactant>
    <interactant intactId="EBI-8641936">
        <id>Q15742</id>
        <label>NAB2</label>
    </interactant>
    <organismsDiffer>false</organismsDiffer>
    <experiments>3</experiments>
</comment>
<comment type="interaction">
    <interactant intactId="EBI-14069005">
        <id>Q9BVG8-5</id>
    </interactant>
    <interactant intactId="EBI-715849">
        <id>O14777</id>
        <label>NDC80</label>
    </interactant>
    <organismsDiffer>false</organismsDiffer>
    <experiments>3</experiments>
</comment>
<comment type="interaction">
    <interactant intactId="EBI-14069005">
        <id>Q9BVG8-5</id>
    </interactant>
    <interactant intactId="EBI-2880203">
        <id>O76041</id>
        <label>NEBL</label>
    </interactant>
    <organismsDiffer>false</organismsDiffer>
    <experiments>3</experiments>
</comment>
<comment type="interaction">
    <interactant intactId="EBI-14069005">
        <id>Q9BVG8-5</id>
    </interactant>
    <interactant intactId="EBI-10172876">
        <id>Q7Z6G3-2</id>
        <label>NECAB2</label>
    </interactant>
    <organismsDiffer>false</organismsDiffer>
    <experiments>3</experiments>
</comment>
<comment type="interaction">
    <interactant intactId="EBI-14069005">
        <id>Q9BVG8-5</id>
    </interactant>
    <interactant intactId="EBI-10178578">
        <id>I6L9F6</id>
        <label>NEFL</label>
    </interactant>
    <organismsDiffer>false</organismsDiffer>
    <experiments>3</experiments>
</comment>
<comment type="interaction">
    <interactant intactId="EBI-14069005">
        <id>Q9BVG8-5</id>
    </interactant>
    <interactant intactId="EBI-475646">
        <id>P07196</id>
        <label>NEFL</label>
    </interactant>
    <organismsDiffer>false</organismsDiffer>
    <experiments>3</experiments>
</comment>
<comment type="interaction">
    <interactant intactId="EBI-14069005">
        <id>Q9BVG8-5</id>
    </interactant>
    <interactant intactId="EBI-12028784">
        <id>Q6X4W1-2</id>
        <label>NSMF</label>
    </interactant>
    <organismsDiffer>false</organismsDiffer>
    <experiments>3</experiments>
</comment>
<comment type="interaction">
    <interactant intactId="EBI-14069005">
        <id>Q9BVG8-5</id>
    </interactant>
    <interactant intactId="EBI-356973">
        <id>O15212</id>
        <label>PFDN6</label>
    </interactant>
    <organismsDiffer>false</organismsDiffer>
    <experiments>3</experiments>
</comment>
<comment type="interaction">
    <interactant intactId="EBI-14069005">
        <id>Q9BVG8-5</id>
    </interactant>
    <interactant intactId="EBI-348567">
        <id>O75928-2</id>
        <label>PIAS2</label>
    </interactant>
    <organismsDiffer>false</organismsDiffer>
    <experiments>3</experiments>
</comment>
<comment type="interaction">
    <interactant intactId="EBI-14069005">
        <id>Q9BVG8-5</id>
    </interactant>
    <interactant intactId="EBI-14066006">
        <id>Q4G0R1</id>
        <label>PIBF1</label>
    </interactant>
    <organismsDiffer>false</organismsDiffer>
    <experiments>3</experiments>
</comment>
<comment type="interaction">
    <interactant intactId="EBI-14069005">
        <id>Q9BVG8-5</id>
    </interactant>
    <interactant intactId="EBI-714158">
        <id>Q13526</id>
        <label>PIN1</label>
    </interactant>
    <organismsDiffer>false</organismsDiffer>
    <experiments>3</experiments>
</comment>
<comment type="interaction">
    <interactant intactId="EBI-14069005">
        <id>Q9BVG8-5</id>
    </interactant>
    <interactant intactId="EBI-10171633">
        <id>Q96PV4</id>
        <label>PNMA5</label>
    </interactant>
    <organismsDiffer>false</organismsDiffer>
    <experiments>3</experiments>
</comment>
<comment type="interaction">
    <interactant intactId="EBI-14069005">
        <id>Q9BVG8-5</id>
    </interactant>
    <interactant intactId="EBI-1105153">
        <id>Q96KQ4</id>
        <label>PPP1R13B</label>
    </interactant>
    <organismsDiffer>false</organismsDiffer>
    <experiments>3</experiments>
</comment>
<comment type="interaction">
    <interactant intactId="EBI-14069005">
        <id>Q9BVG8-5</id>
    </interactant>
    <interactant intactId="EBI-11320284">
        <id>Q9NQX0</id>
        <label>PRDM6</label>
    </interactant>
    <organismsDiffer>false</organismsDiffer>
    <experiments>3</experiments>
</comment>
<comment type="interaction">
    <interactant intactId="EBI-14069005">
        <id>Q9BVG8-5</id>
    </interactant>
    <interactant intactId="EBI-2798416">
        <id>Q99633</id>
        <label>PRPF18</label>
    </interactant>
    <organismsDiffer>false</organismsDiffer>
    <experiments>3</experiments>
</comment>
<comment type="interaction">
    <interactant intactId="EBI-14069005">
        <id>Q9BVG8-5</id>
    </interactant>
    <interactant intactId="EBI-1567797">
        <id>Q8WWY3</id>
        <label>PRPF31</label>
    </interactant>
    <organismsDiffer>false</organismsDiffer>
    <experiments>3</experiments>
</comment>
<comment type="interaction">
    <interactant intactId="EBI-14069005">
        <id>Q9BVG8-5</id>
    </interactant>
    <interactant intactId="EBI-752074">
        <id>P41219</id>
        <label>PRPH</label>
    </interactant>
    <organismsDiffer>false</organismsDiffer>
    <experiments>3</experiments>
</comment>
<comment type="interaction">
    <interactant intactId="EBI-14069005">
        <id>Q9BVG8-5</id>
    </interactant>
    <interactant intactId="EBI-372273">
        <id>P20618</id>
        <label>PSMB1</label>
    </interactant>
    <organismsDiffer>false</organismsDiffer>
    <experiments>3</experiments>
</comment>
<comment type="interaction">
    <interactant intactId="EBI-14069005">
        <id>Q9BVG8-5</id>
    </interactant>
    <interactant intactId="EBI-713992">
        <id>P47224</id>
        <label>RABIF</label>
    </interactant>
    <organismsDiffer>false</organismsDiffer>
    <experiments>3</experiments>
</comment>
<comment type="interaction">
    <interactant intactId="EBI-14069005">
        <id>Q9BVG8-5</id>
    </interactant>
    <interactant intactId="EBI-1055693">
        <id>O75771</id>
        <label>RAD51D</label>
    </interactant>
    <organismsDiffer>false</organismsDiffer>
    <experiments>3</experiments>
</comment>
<comment type="interaction">
    <interactant intactId="EBI-14069005">
        <id>Q9BVG8-5</id>
    </interactant>
    <interactant intactId="EBI-948156">
        <id>Q9Y4B4</id>
        <label>RAD54L2</label>
    </interactant>
    <organismsDiffer>false</organismsDiffer>
    <experiments>3</experiments>
</comment>
<comment type="interaction">
    <interactant intactId="EBI-14069005">
        <id>Q9BVG8-5</id>
    </interactant>
    <interactant intactId="EBI-740773">
        <id>Q96IZ5</id>
        <label>RBM41</label>
    </interactant>
    <organismsDiffer>false</organismsDiffer>
    <experiments>3</experiments>
</comment>
<comment type="interaction">
    <interactant intactId="EBI-14069005">
        <id>Q9BVG8-5</id>
    </interactant>
    <interactant intactId="EBI-748350">
        <id>Q9UHP6</id>
        <label>RSPH14</label>
    </interactant>
    <organismsDiffer>false</organismsDiffer>
    <experiments>3</experiments>
</comment>
<comment type="interaction">
    <interactant intactId="EBI-14069005">
        <id>Q9BVG8-5</id>
    </interactant>
    <interactant intactId="EBI-11984663">
        <id>Q06455-2</id>
        <label>RUNX1T1</label>
    </interactant>
    <organismsDiffer>false</organismsDiffer>
    <experiments>3</experiments>
</comment>
<comment type="interaction">
    <interactant intactId="EBI-14069005">
        <id>Q9BVG8-5</id>
    </interactant>
    <interactant intactId="EBI-748391">
        <id>Q9BWG6</id>
        <label>SCNM1</label>
    </interactant>
    <organismsDiffer>false</organismsDiffer>
    <experiments>3</experiments>
</comment>
<comment type="interaction">
    <interactant intactId="EBI-14069005">
        <id>Q9BVG8-5</id>
    </interactant>
    <interactant intactId="EBI-10692913">
        <id>Q9UIL1-3</id>
        <label>SCOC</label>
    </interactant>
    <organismsDiffer>false</organismsDiffer>
    <experiments>3</experiments>
</comment>
<comment type="interaction">
    <interactant intactId="EBI-14069005">
        <id>Q9BVG8-5</id>
    </interactant>
    <interactant intactId="EBI-12037847">
        <id>Q6ZSJ9</id>
        <label>SHISA6</label>
    </interactant>
    <organismsDiffer>false</organismsDiffer>
    <experiments>3</experiments>
</comment>
<comment type="interaction">
    <interactant intactId="EBI-14069005">
        <id>Q9BVG8-5</id>
    </interactant>
    <interactant intactId="EBI-741237">
        <id>O60504</id>
        <label>SORBS3</label>
    </interactant>
    <organismsDiffer>false</organismsDiffer>
    <experiments>3</experiments>
</comment>
<comment type="interaction">
    <interactant intactId="EBI-14069005">
        <id>Q9BVG8-5</id>
    </interactant>
    <interactant intactId="EBI-11954419">
        <id>P35711-4</id>
        <label>SOX5</label>
    </interactant>
    <organismsDiffer>false</organismsDiffer>
    <experiments>3</experiments>
</comment>
<comment type="interaction">
    <interactant intactId="EBI-14069005">
        <id>Q9BVG8-5</id>
    </interactant>
    <interactant intactId="EBI-744066">
        <id>Q9UM82</id>
        <label>SPATA2</label>
    </interactant>
    <organismsDiffer>false</organismsDiffer>
    <experiments>3</experiments>
</comment>
<comment type="interaction">
    <interactant intactId="EBI-14069005">
        <id>Q9BVG8-5</id>
    </interactant>
    <interactant intactId="EBI-11995806">
        <id>Q9H0A9-2</id>
        <label>SPATC1L</label>
    </interactant>
    <organismsDiffer>false</organismsDiffer>
    <experiments>3</experiments>
</comment>
<comment type="interaction">
    <interactant intactId="EBI-14069005">
        <id>Q9BVG8-5</id>
    </interactant>
    <interactant intactId="EBI-2212028">
        <id>Q9Y2D8</id>
        <label>SSX2IP</label>
    </interactant>
    <organismsDiffer>false</organismsDiffer>
    <experiments>3</experiments>
</comment>
<comment type="interaction">
    <interactant intactId="EBI-14069005">
        <id>Q9BVG8-5</id>
    </interactant>
    <interactant intactId="EBI-725557">
        <id>Q9NZ72</id>
        <label>STMN3</label>
    </interactant>
    <organismsDiffer>false</organismsDiffer>
    <experiments>3</experiments>
</comment>
<comment type="interaction">
    <interactant intactId="EBI-14069005">
        <id>Q9BVG8-5</id>
    </interactant>
    <interactant intactId="EBI-714135">
        <id>O75558</id>
        <label>STX11</label>
    </interactant>
    <organismsDiffer>false</organismsDiffer>
    <experiments>7</experiments>
</comment>
<comment type="interaction">
    <interactant intactId="EBI-14069005">
        <id>Q9BVG8-5</id>
    </interactant>
    <interactant intactId="EBI-712466">
        <id>Q16623</id>
        <label>STX1A</label>
    </interactant>
    <organismsDiffer>false</organismsDiffer>
    <experiments>3</experiments>
</comment>
<comment type="interaction">
    <interactant intactId="EBI-14069005">
        <id>Q9BVG8-5</id>
    </interactant>
    <interactant intactId="EBI-11958386">
        <id>Q6PIF2</id>
        <label>SYCE2</label>
    </interactant>
    <organismsDiffer>false</organismsDiffer>
    <experiments>3</experiments>
</comment>
<comment type="interaction">
    <interactant intactId="EBI-14069005">
        <id>Q9BVG8-5</id>
    </interactant>
    <interactant intactId="EBI-10246152">
        <id>Q5T7P8-2</id>
        <label>SYT6</label>
    </interactant>
    <organismsDiffer>false</organismsDiffer>
    <experiments>3</experiments>
</comment>
<comment type="interaction">
    <interactant intactId="EBI-14069005">
        <id>Q9BVG8-5</id>
    </interactant>
    <interactant intactId="EBI-747142">
        <id>Q96C24</id>
        <label>SYTL4</label>
    </interactant>
    <organismsDiffer>false</organismsDiffer>
    <experiments>3</experiments>
</comment>
<comment type="interaction">
    <interactant intactId="EBI-14069005">
        <id>Q9BVG8-5</id>
    </interactant>
    <interactant intactId="EBI-745958">
        <id>Q5VWN6</id>
        <label>TASOR2</label>
    </interactant>
    <organismsDiffer>false</organismsDiffer>
    <experiments>6</experiments>
</comment>
<comment type="interaction">
    <interactant intactId="EBI-14069005">
        <id>Q9BVG8-5</id>
    </interactant>
    <interactant intactId="EBI-8787464">
        <id>Q9NU19</id>
        <label>TBC1D22B</label>
    </interactant>
    <organismsDiffer>false</organismsDiffer>
    <experiments>3</experiments>
</comment>
<comment type="interaction">
    <interactant intactId="EBI-14069005">
        <id>Q9BVG8-5</id>
    </interactant>
    <interactant intactId="EBI-1105213">
        <id>Q9UBB9</id>
        <label>TFIP11</label>
    </interactant>
    <organismsDiffer>false</organismsDiffer>
    <experiments>3</experiments>
</comment>
<comment type="interaction">
    <interactant intactId="EBI-14069005">
        <id>Q9BVG8-5</id>
    </interactant>
    <interactant intactId="EBI-11741437">
        <id>Q08117-2</id>
        <label>TLE5</label>
    </interactant>
    <organismsDiffer>false</organismsDiffer>
    <experiments>3</experiments>
</comment>
<comment type="interaction">
    <interactant intactId="EBI-14069005">
        <id>Q9BVG8-5</id>
    </interactant>
    <interactant intactId="EBI-357849">
        <id>Q15025</id>
        <label>TNIP1</label>
    </interactant>
    <organismsDiffer>false</organismsDiffer>
    <experiments>3</experiments>
</comment>
<comment type="interaction">
    <interactant intactId="EBI-14069005">
        <id>Q9BVG8-5</id>
    </interactant>
    <interactant intactId="EBI-746692">
        <id>P19237</id>
        <label>TNNI1</label>
    </interactant>
    <organismsDiffer>false</organismsDiffer>
    <experiments>3</experiments>
</comment>
<comment type="interaction">
    <interactant intactId="EBI-14069005">
        <id>Q9BVG8-5</id>
    </interactant>
    <interactant intactId="EBI-355744">
        <id>Q12933</id>
        <label>TRAF2</label>
    </interactant>
    <organismsDiffer>false</organismsDiffer>
    <experiments>3</experiments>
</comment>
<comment type="interaction">
    <interactant intactId="EBI-14069005">
        <id>Q9BVG8-5</id>
    </interactant>
    <interactant intactId="EBI-2820256">
        <id>Q14142</id>
        <label>TRIM14</label>
    </interactant>
    <organismsDiffer>false</organismsDiffer>
    <experiments>3</experiments>
</comment>
<comment type="interaction">
    <interactant intactId="EBI-14069005">
        <id>Q9BVG8-5</id>
    </interactant>
    <interactant intactId="EBI-2130429">
        <id>Q9BYV2</id>
        <label>TRIM54</label>
    </interactant>
    <organismsDiffer>false</organismsDiffer>
    <experiments>3</experiments>
</comment>
<comment type="interaction">
    <interactant intactId="EBI-14069005">
        <id>Q9BVG8-5</id>
    </interactant>
    <interactant intactId="EBI-10241197">
        <id>Q3SY00</id>
        <label>TSGA10IP</label>
    </interactant>
    <organismsDiffer>false</organismsDiffer>
    <experiments>3</experiments>
</comment>
<comment type="interaction">
    <interactant intactId="EBI-14069005">
        <id>Q9BVG8-5</id>
    </interactant>
    <interactant intactId="EBI-746981">
        <id>Q969E8</id>
        <label>TSR2</label>
    </interactant>
    <organismsDiffer>false</organismsDiffer>
    <experiments>3</experiments>
</comment>
<comment type="interaction">
    <interactant intactId="EBI-14069005">
        <id>Q9BVG8-5</id>
    </interactant>
    <interactant intactId="EBI-8601749">
        <id>Q495M9</id>
        <label>USH1G</label>
    </interactant>
    <organismsDiffer>false</organismsDiffer>
    <experiments>3</experiments>
</comment>
<comment type="interaction">
    <interactant intactId="EBI-14069005">
        <id>Q9BVG8-5</id>
    </interactant>
    <interactant intactId="EBI-743272">
        <id>O75604</id>
        <label>USP2</label>
    </interactant>
    <organismsDiffer>false</organismsDiffer>
    <experiments>3</experiments>
</comment>
<comment type="interaction">
    <interactant intactId="EBI-14069005">
        <id>Q9BVG8-5</id>
    </interactant>
    <interactant intactId="EBI-353844">
        <id>P08670</id>
        <label>VIM</label>
    </interactant>
    <organismsDiffer>false</organismsDiffer>
    <experiments>3</experiments>
</comment>
<comment type="interaction">
    <interactant intactId="EBI-14069005">
        <id>Q9BVG8-5</id>
    </interactant>
    <interactant intactId="EBI-2799833">
        <id>Q8N1B4</id>
        <label>VPS52</label>
    </interactant>
    <organismsDiffer>false</organismsDiffer>
    <experiments>3</experiments>
</comment>
<comment type="interaction">
    <interactant intactId="EBI-14069005">
        <id>Q9BVG8-5</id>
    </interactant>
    <interactant intactId="EBI-12026286">
        <id>Q9UPY6-2</id>
        <label>WASF3</label>
    </interactant>
    <organismsDiffer>false</organismsDiffer>
    <experiments>3</experiments>
</comment>
<comment type="interaction">
    <interactant intactId="EBI-14069005">
        <id>Q9BVG8-5</id>
    </interactant>
    <interactant intactId="EBI-740037">
        <id>O96006</id>
        <label>ZBED1</label>
    </interactant>
    <organismsDiffer>false</organismsDiffer>
    <experiments>3</experiments>
</comment>
<comment type="interaction">
    <interactant intactId="EBI-14069005">
        <id>Q9BVG8-5</id>
    </interactant>
    <interactant intactId="EBI-711925">
        <id>Q05516</id>
        <label>ZBTB16</label>
    </interactant>
    <organismsDiffer>false</organismsDiffer>
    <experiments>3</experiments>
</comment>
<comment type="interaction">
    <interactant intactId="EBI-14069005">
        <id>Q9BVG8-5</id>
    </interactant>
    <interactant intactId="EBI-742740">
        <id>Q96BR9</id>
        <label>ZBTB8A</label>
    </interactant>
    <organismsDiffer>false</organismsDiffer>
    <experiments>3</experiments>
</comment>
<comment type="interaction">
    <interactant intactId="EBI-14069005">
        <id>Q9BVG8-5</id>
    </interactant>
    <interactant intactId="EBI-16428984">
        <id>A0A0S2Z6H0</id>
        <label>ZGPAT</label>
    </interactant>
    <organismsDiffer>false</organismsDiffer>
    <experiments>3</experiments>
</comment>
<comment type="interaction">
    <interactant intactId="EBI-14069005">
        <id>Q9BVG8-5</id>
    </interactant>
    <interactant intactId="EBI-10183064">
        <id>Q8N5A5-2</id>
        <label>ZGPAT</label>
    </interactant>
    <organismsDiffer>false</organismsDiffer>
    <experiments>6</experiments>
</comment>
<comment type="interaction">
    <interactant intactId="EBI-14069005">
        <id>Q9BVG8-5</id>
    </interactant>
    <interactant intactId="EBI-12055755">
        <id>Q9UJW8-4</id>
        <label>ZNF180</label>
    </interactant>
    <organismsDiffer>false</organismsDiffer>
    <experiments>3</experiments>
</comment>
<comment type="interaction">
    <interactant intactId="EBI-14069005">
        <id>Q9BVG8-5</id>
    </interactant>
    <interactant intactId="EBI-717634">
        <id>P17024</id>
        <label>ZNF20</label>
    </interactant>
    <organismsDiffer>false</organismsDiffer>
    <experiments>3</experiments>
</comment>
<comment type="interaction">
    <interactant intactId="EBI-14069005">
        <id>Q9BVG8-5</id>
    </interactant>
    <interactant intactId="EBI-10177272">
        <id>P15622-3</id>
        <label>ZNF250</label>
    </interactant>
    <organismsDiffer>false</organismsDiffer>
    <experiments>3</experiments>
</comment>
<comment type="interaction">
    <interactant intactId="EBI-14069005">
        <id>Q9BVG8-5</id>
    </interactant>
    <interactant intactId="EBI-740727">
        <id>Q8TAU3</id>
        <label>ZNF417</label>
    </interactant>
    <organismsDiffer>false</organismsDiffer>
    <experiments>3</experiments>
</comment>
<comment type="interaction">
    <interactant intactId="EBI-14069005">
        <id>Q9BVG8-5</id>
    </interactant>
    <interactant intactId="EBI-740232">
        <id>Q9NWS9-2</id>
        <label>ZNF446</label>
    </interactant>
    <organismsDiffer>false</organismsDiffer>
    <experiments>3</experiments>
</comment>
<comment type="interaction">
    <interactant intactId="EBI-14069005">
        <id>Q9BVG8-5</id>
    </interactant>
    <interactant intactId="EBI-10172590">
        <id>Q7Z3I7</id>
        <label>ZNF572</label>
    </interactant>
    <organismsDiffer>false</organismsDiffer>
    <experiments>4</experiments>
</comment>
<comment type="interaction">
    <interactant intactId="EBI-14069005">
        <id>Q9BVG8-5</id>
    </interactant>
    <interactant intactId="EBI-625509">
        <id>Q8N720</id>
        <label>ZNF655</label>
    </interactant>
    <organismsDiffer>false</organismsDiffer>
    <experiments>3</experiments>
</comment>
<comment type="interaction">
    <interactant intactId="EBI-14069005">
        <id>Q9BVG8-5</id>
    </interactant>
    <interactant intactId="EBI-16429014">
        <id>A0A0S2Z5X4</id>
        <label>ZNF688</label>
    </interactant>
    <organismsDiffer>false</organismsDiffer>
    <experiments>3</experiments>
</comment>
<comment type="interaction">
    <interactant intactId="EBI-14069005">
        <id>Q9BVG8-5</id>
    </interactant>
    <interactant intactId="EBI-10251462">
        <id>Q6NX45</id>
        <label>ZNF774</label>
    </interactant>
    <organismsDiffer>false</organismsDiffer>
    <experiments>3</experiments>
</comment>
<comment type="interaction">
    <interactant intactId="EBI-14069005">
        <id>Q9BVG8-5</id>
    </interactant>
    <interactant intactId="EBI-3925400">
        <id>A8K8V0</id>
        <label>ZNF785</label>
    </interactant>
    <organismsDiffer>false</organismsDiffer>
    <experiments>3</experiments>
</comment>
<comment type="interaction">
    <interactant intactId="EBI-14069005">
        <id>Q9BVG8-5</id>
    </interactant>
    <interactant intactId="EBI-5667516">
        <id>Q9Y2P0</id>
        <label>ZNF835</label>
    </interactant>
    <organismsDiffer>false</organismsDiffer>
    <experiments>3</experiments>
</comment>
<comment type="interaction">
    <interactant intactId="EBI-14069005">
        <id>Q9BVG8-5</id>
    </interactant>
    <interactant intactId="EBI-527853">
        <id>Q9UGI0</id>
        <label>ZRANB1</label>
    </interactant>
    <organismsDiffer>false</organismsDiffer>
    <experiments>3</experiments>
</comment>
<comment type="interaction">
    <interactant intactId="EBI-14069005">
        <id>Q9BVG8-5</id>
    </interactant>
    <interactant intactId="EBI-25900580">
        <id>Q9Y649</id>
    </interactant>
    <organismsDiffer>false</organismsDiffer>
    <experiments>3</experiments>
</comment>
<comment type="subcellular location">
    <subcellularLocation>
        <location evidence="6">Cell junction</location>
        <location evidence="6">Adherens junction</location>
    </subcellularLocation>
    <subcellularLocation>
        <location evidence="6">Cytoplasm</location>
        <location evidence="6">Cytoskeleton</location>
        <location evidence="6">Microtubule organizing center</location>
        <location evidence="6">Centrosome</location>
    </subcellularLocation>
    <subcellularLocation>
        <location evidence="1">Cytoplasmic vesicle membrane</location>
        <topology evidence="1">Peripheral membrane protein</topology>
    </subcellularLocation>
    <text evidence="1">Apical cell membrane. On membrane organelles immediately beneath the apical plasma membrane of renal tubular epithelial cells. Localized in the distal tubules and loops of Henle in the kidney, but not in the proximal tubules or the glomeruli, with stronger staining in the apical area of these epithelial cells (By similarity). Localizes along zonula adherens only at mature cell-cell contacts.</text>
</comment>
<comment type="alternative products">
    <event type="alternative splicing"/>
    <isoform>
        <id>Q9BVG8-3</id>
        <name>1</name>
        <sequence type="displayed"/>
    </isoform>
    <isoform>
        <id>Q9BVG8-2</id>
        <name>2</name>
        <sequence type="described" ref="VSP_021018"/>
    </isoform>
    <isoform>
        <id>Q9BVG8-4</id>
        <name>3</name>
        <sequence type="described" ref="VSP_022361 VSP_022362"/>
    </isoform>
    <isoform>
        <id>Q9BVG8-5</id>
        <name>4</name>
        <sequence type="described" ref="VSP_043724 VSP_021018"/>
    </isoform>
    <isoform>
        <id>Q9BVG8-6</id>
        <name>5</name>
        <sequence type="described" ref="VSP_057224 VSP_021018"/>
    </isoform>
</comment>
<comment type="miscellaneous">
    <molecule>Isoform 3</molecule>
    <text evidence="11">May be produced at very low levels due to a premature stop codon in the mRNA, leading to nonsense-mediated mRNA decay.</text>
</comment>
<comment type="similarity">
    <text evidence="3">Belongs to the TRAFAC class myosin-kinesin ATPase superfamily. Kinesin family.</text>
</comment>
<comment type="sequence caution" evidence="11">
    <conflict type="miscellaneous discrepancy">
        <sequence resource="EMBL-CDS" id="AAH34234"/>
    </conflict>
    <text>Intron retention.</text>
</comment>
<comment type="sequence caution" evidence="11">
    <conflict type="miscellaneous discrepancy">
        <sequence resource="EMBL-CDS" id="AAH41132"/>
    </conflict>
    <text>Intron retention.</text>
</comment>
<comment type="sequence caution" evidence="11">
    <conflict type="miscellaneous discrepancy">
        <sequence resource="EMBL-CDS" id="AAH47051"/>
    </conflict>
    <text>Intron retention.</text>
</comment>
<comment type="sequence caution" evidence="11">
    <conflict type="erroneous initiation">
        <sequence resource="EMBL-CDS" id="BAD92527"/>
    </conflict>
</comment>
<evidence type="ECO:0000250" key="1"/>
<evidence type="ECO:0000255" key="2"/>
<evidence type="ECO:0000255" key="3">
    <source>
        <dbReference type="PROSITE-ProRule" id="PRU00283"/>
    </source>
</evidence>
<evidence type="ECO:0000256" key="4">
    <source>
        <dbReference type="SAM" id="MobiDB-lite"/>
    </source>
</evidence>
<evidence type="ECO:0000269" key="5">
    <source>
    </source>
</evidence>
<evidence type="ECO:0000269" key="6">
    <source>
    </source>
</evidence>
<evidence type="ECO:0000303" key="7">
    <source>
    </source>
</evidence>
<evidence type="ECO:0000303" key="8">
    <source>
    </source>
</evidence>
<evidence type="ECO:0000303" key="9">
    <source>
    </source>
</evidence>
<evidence type="ECO:0000303" key="10">
    <source ref="2"/>
</evidence>
<evidence type="ECO:0000305" key="11"/>
<evidence type="ECO:0007744" key="12">
    <source>
    </source>
</evidence>
<evidence type="ECO:0007829" key="13">
    <source>
        <dbReference type="PDB" id="5WDE"/>
    </source>
</evidence>
<protein>
    <recommendedName>
        <fullName>Kinesin-like protein KIFC3</fullName>
    </recommendedName>
</protein>
<sequence length="833" mass="92775">MVPSRRTWNLGATPSLRGLWRVGRAPEPEPGMARPAPAPASPAARPFPHTGPGRLRTGRGKDTPVCGDEDSSARSAARPALAQCRALSVDWAGPGSPHGLYLTLQVEHLKEKLISQAQEVSRLRSELGGTDLEKHRDLLMVENERLRQEMRRCEAELQELRTKPAGPCPGCEHSQESAQLRDKLSQLQLEMAESKGMLSELNLEVQQKTDRLAEVELRLKDCLAEKAQEEERLSRRLRDSHETIASLRAQSPPVKYVIKTVEVESSKTKQALSESQARNQHLQEQVAMQRQVLKEMEQQLQSSHQLTARLRAQIAMYESELERAHGQMLEEMQSLEEDKNRAIEEAFARAQVEMKAVHENLAGVRTNLLTLQPALRTLTNDYNGLKRQVRGFPLLLQEALRSVKAEIGQAIEEVNSNNQELLRKYRRELQLRKKCHNELVRLKGNIRVIARVRPVTKEDGEGPEATNAVTFDADDDSIIHLLHKGKPVSFELDKVFSPQASQQDVFQEVQALVTSCIDGFNVCIFAYGQTGAGKTYTMEGTAENPGINQRALQLLFSEVQEKASDWEYTITVSAAEIYNEVLRDLLGKEPQEKLEIRLCPDGSGQLYVPGLTEFQVQSVDDINKVFEFGHTNRTTEFTNLNEHSSRSHALLIVTVRGVDCSTGLRTTGKLNLVDLAGSERVGKSGAEGSRLREAQHINKSLSALGDVIAALRSRQGHVPFRNSKLTYLLQDSLSGDSKTLMVVQVSPVEKNTSETLYSLKFAERVRSVELGPGLRRAELGSWSSQEHLEWEPACQTPQPSARAHSAPSSGTSSRPGSIRRKLQPSGKSRPLPV</sequence>